<gene>
    <name evidence="2 81" type="primary">SPAST</name>
    <name type="synonym">ADPSP</name>
    <name type="synonym">FSP2</name>
    <name evidence="73" type="synonym">KIAA1083</name>
    <name evidence="2" type="synonym">SPG4</name>
</gene>
<evidence type="ECO:0000255" key="1"/>
<evidence type="ECO:0000255" key="2">
    <source>
        <dbReference type="HAMAP-Rule" id="MF_03021"/>
    </source>
</evidence>
<evidence type="ECO:0000256" key="3">
    <source>
        <dbReference type="SAM" id="MobiDB-lite"/>
    </source>
</evidence>
<evidence type="ECO:0000269" key="4">
    <source>
    </source>
</evidence>
<evidence type="ECO:0000269" key="5">
    <source>
    </source>
</evidence>
<evidence type="ECO:0000269" key="6">
    <source>
    </source>
</evidence>
<evidence type="ECO:0000269" key="7">
    <source>
    </source>
</evidence>
<evidence type="ECO:0000269" key="8">
    <source>
    </source>
</evidence>
<evidence type="ECO:0000269" key="9">
    <source>
    </source>
</evidence>
<evidence type="ECO:0000269" key="10">
    <source>
    </source>
</evidence>
<evidence type="ECO:0000269" key="11">
    <source>
    </source>
</evidence>
<evidence type="ECO:0000269" key="12">
    <source>
    </source>
</evidence>
<evidence type="ECO:0000269" key="13">
    <source>
    </source>
</evidence>
<evidence type="ECO:0000269" key="14">
    <source>
    </source>
</evidence>
<evidence type="ECO:0000269" key="15">
    <source>
    </source>
</evidence>
<evidence type="ECO:0000269" key="16">
    <source>
    </source>
</evidence>
<evidence type="ECO:0000269" key="17">
    <source>
    </source>
</evidence>
<evidence type="ECO:0000269" key="18">
    <source>
    </source>
</evidence>
<evidence type="ECO:0000269" key="19">
    <source>
    </source>
</evidence>
<evidence type="ECO:0000269" key="20">
    <source>
    </source>
</evidence>
<evidence type="ECO:0000269" key="21">
    <source>
    </source>
</evidence>
<evidence type="ECO:0000269" key="22">
    <source>
    </source>
</evidence>
<evidence type="ECO:0000269" key="23">
    <source>
    </source>
</evidence>
<evidence type="ECO:0000269" key="24">
    <source>
    </source>
</evidence>
<evidence type="ECO:0000269" key="25">
    <source>
    </source>
</evidence>
<evidence type="ECO:0000269" key="26">
    <source>
    </source>
</evidence>
<evidence type="ECO:0000269" key="27">
    <source>
    </source>
</evidence>
<evidence type="ECO:0000269" key="28">
    <source>
    </source>
</evidence>
<evidence type="ECO:0000269" key="29">
    <source>
    </source>
</evidence>
<evidence type="ECO:0000269" key="30">
    <source>
    </source>
</evidence>
<evidence type="ECO:0000269" key="31">
    <source>
    </source>
</evidence>
<evidence type="ECO:0000269" key="32">
    <source>
    </source>
</evidence>
<evidence type="ECO:0000269" key="33">
    <source>
    </source>
</evidence>
<evidence type="ECO:0000269" key="34">
    <source>
    </source>
</evidence>
<evidence type="ECO:0000269" key="35">
    <source>
    </source>
</evidence>
<evidence type="ECO:0000269" key="36">
    <source>
    </source>
</evidence>
<evidence type="ECO:0000269" key="37">
    <source>
    </source>
</evidence>
<evidence type="ECO:0000269" key="38">
    <source>
    </source>
</evidence>
<evidence type="ECO:0000269" key="39">
    <source>
    </source>
</evidence>
<evidence type="ECO:0000269" key="40">
    <source>
    </source>
</evidence>
<evidence type="ECO:0000269" key="41">
    <source>
    </source>
</evidence>
<evidence type="ECO:0000269" key="42">
    <source>
    </source>
</evidence>
<evidence type="ECO:0000269" key="43">
    <source>
    </source>
</evidence>
<evidence type="ECO:0000269" key="44">
    <source>
    </source>
</evidence>
<evidence type="ECO:0000269" key="45">
    <source>
    </source>
</evidence>
<evidence type="ECO:0000269" key="46">
    <source>
    </source>
</evidence>
<evidence type="ECO:0000269" key="47">
    <source>
    </source>
</evidence>
<evidence type="ECO:0000269" key="48">
    <source>
    </source>
</evidence>
<evidence type="ECO:0000269" key="49">
    <source>
    </source>
</evidence>
<evidence type="ECO:0000269" key="50">
    <source>
    </source>
</evidence>
<evidence type="ECO:0000269" key="51">
    <source>
    </source>
</evidence>
<evidence type="ECO:0000269" key="52">
    <source>
    </source>
</evidence>
<evidence type="ECO:0000269" key="53">
    <source>
    </source>
</evidence>
<evidence type="ECO:0000269" key="54">
    <source>
    </source>
</evidence>
<evidence type="ECO:0000269" key="55">
    <source>
    </source>
</evidence>
<evidence type="ECO:0000269" key="56">
    <source>
    </source>
</evidence>
<evidence type="ECO:0000269" key="57">
    <source>
    </source>
</evidence>
<evidence type="ECO:0000269" key="58">
    <source>
    </source>
</evidence>
<evidence type="ECO:0000269" key="59">
    <source>
    </source>
</evidence>
<evidence type="ECO:0000269" key="60">
    <source>
    </source>
</evidence>
<evidence type="ECO:0000269" key="61">
    <source>
    </source>
</evidence>
<evidence type="ECO:0000269" key="62">
    <source>
    </source>
</evidence>
<evidence type="ECO:0000269" key="63">
    <source>
    </source>
</evidence>
<evidence type="ECO:0000269" key="64">
    <source>
    </source>
</evidence>
<evidence type="ECO:0000269" key="65">
    <source>
    </source>
</evidence>
<evidence type="ECO:0000269" key="66">
    <source>
    </source>
</evidence>
<evidence type="ECO:0000269" key="67">
    <source>
    </source>
</evidence>
<evidence type="ECO:0000269" key="68">
    <source>
    </source>
</evidence>
<evidence type="ECO:0000269" key="69">
    <source>
    </source>
</evidence>
<evidence type="ECO:0000269" key="70">
    <source>
    </source>
</evidence>
<evidence type="ECO:0000269" key="71">
    <source>
    </source>
</evidence>
<evidence type="ECO:0000269" key="72">
    <source>
    </source>
</evidence>
<evidence type="ECO:0000303" key="73">
    <source>
    </source>
</evidence>
<evidence type="ECO:0000303" key="74">
    <source>
    </source>
</evidence>
<evidence type="ECO:0000303" key="75">
    <source>
    </source>
</evidence>
<evidence type="ECO:0000303" key="76">
    <source>
    </source>
</evidence>
<evidence type="ECO:0000303" key="77">
    <source>
    </source>
</evidence>
<evidence type="ECO:0000305" key="78"/>
<evidence type="ECO:0000305" key="79">
    <source>
    </source>
</evidence>
<evidence type="ECO:0000305" key="80">
    <source>
    </source>
</evidence>
<evidence type="ECO:0000312" key="81">
    <source>
        <dbReference type="HGNC" id="HGNC:11233"/>
    </source>
</evidence>
<evidence type="ECO:0007744" key="82">
    <source>
    </source>
</evidence>
<evidence type="ECO:0007744" key="83">
    <source>
    </source>
</evidence>
<evidence type="ECO:0007744" key="84">
    <source>
    </source>
</evidence>
<evidence type="ECO:0007744" key="85">
    <source>
    </source>
</evidence>
<evidence type="ECO:0007744" key="86">
    <source>
    </source>
</evidence>
<evidence type="ECO:0007829" key="87">
    <source>
        <dbReference type="PDB" id="5Z6Q"/>
    </source>
</evidence>
<evidence type="ECO:0007829" key="88">
    <source>
        <dbReference type="PDB" id="5Z6R"/>
    </source>
</evidence>
<evidence type="ECO:0007829" key="89">
    <source>
        <dbReference type="PDB" id="7S7J"/>
    </source>
</evidence>
<dbReference type="EC" id="5.6.1.1" evidence="2 30 33 38 41 43 58"/>
<dbReference type="EMBL" id="AJ246001">
    <property type="protein sequence ID" value="CAB60141.1"/>
    <property type="molecule type" value="mRNA"/>
</dbReference>
<dbReference type="EMBL" id="AJ246003">
    <property type="protein sequence ID" value="CAB60208.1"/>
    <property type="molecule type" value="Genomic_DNA"/>
</dbReference>
<dbReference type="EMBL" id="AB029006">
    <property type="protein sequence ID" value="BAA83035.1"/>
    <property type="molecule type" value="mRNA"/>
</dbReference>
<dbReference type="EMBL" id="CH471053">
    <property type="protein sequence ID" value="EAX00462.1"/>
    <property type="molecule type" value="Genomic_DNA"/>
</dbReference>
<dbReference type="EMBL" id="BC150260">
    <property type="protein sequence ID" value="AAI50261.1"/>
    <property type="molecule type" value="mRNA"/>
</dbReference>
<dbReference type="CCDS" id="CCDS1778.1">
    <molecule id="Q9UBP0-1"/>
</dbReference>
<dbReference type="CCDS" id="CCDS1779.1">
    <molecule id="Q9UBP0-2"/>
</dbReference>
<dbReference type="RefSeq" id="NP_055761.2">
    <molecule id="Q9UBP0-1"/>
    <property type="nucleotide sequence ID" value="NM_014946.3"/>
</dbReference>
<dbReference type="RefSeq" id="NP_955468.1">
    <molecule id="Q9UBP0-2"/>
    <property type="nucleotide sequence ID" value="NM_199436.2"/>
</dbReference>
<dbReference type="PDB" id="3EAB">
    <property type="method" value="X-ray"/>
    <property type="resolution" value="2.50 A"/>
    <property type="chains" value="A/B/C/D/E/F=112-196"/>
</dbReference>
<dbReference type="PDB" id="3VFD">
    <property type="method" value="X-ray"/>
    <property type="resolution" value="3.30 A"/>
    <property type="chains" value="A=228-616"/>
</dbReference>
<dbReference type="PDB" id="5Z6Q">
    <property type="method" value="X-ray"/>
    <property type="resolution" value="3.00 A"/>
    <property type="chains" value="A=229-616"/>
</dbReference>
<dbReference type="PDB" id="5Z6R">
    <property type="method" value="X-ray"/>
    <property type="resolution" value="3.00 A"/>
    <property type="chains" value="A=229-616"/>
</dbReference>
<dbReference type="PDB" id="6PEK">
    <property type="method" value="EM"/>
    <property type="resolution" value="4.20 A"/>
    <property type="chains" value="A/B/C/D/E=87-616"/>
</dbReference>
<dbReference type="PDB" id="6PEN">
    <property type="method" value="EM"/>
    <property type="resolution" value="4.20 A"/>
    <property type="chains" value="A/B/C/D/E/F=87-616"/>
</dbReference>
<dbReference type="PDB" id="7S7J">
    <property type="method" value="X-ray"/>
    <property type="resolution" value="1.15 A"/>
    <property type="chains" value="A=112-195"/>
</dbReference>
<dbReference type="PDBsum" id="3EAB"/>
<dbReference type="PDBsum" id="3VFD"/>
<dbReference type="PDBsum" id="5Z6Q"/>
<dbReference type="PDBsum" id="5Z6R"/>
<dbReference type="PDBsum" id="6PEK"/>
<dbReference type="PDBsum" id="6PEN"/>
<dbReference type="PDBsum" id="7S7J"/>
<dbReference type="EMDB" id="EMD-20327"/>
<dbReference type="SMR" id="Q9UBP0"/>
<dbReference type="BioGRID" id="112562">
    <property type="interactions" value="65"/>
</dbReference>
<dbReference type="CORUM" id="Q9UBP0"/>
<dbReference type="DIP" id="DIP-38418N"/>
<dbReference type="ELM" id="Q9UBP0"/>
<dbReference type="FunCoup" id="Q9UBP0">
    <property type="interactions" value="3313"/>
</dbReference>
<dbReference type="IntAct" id="Q9UBP0">
    <property type="interactions" value="54"/>
</dbReference>
<dbReference type="MINT" id="Q9UBP0"/>
<dbReference type="STRING" id="9606.ENSP00000320885"/>
<dbReference type="BindingDB" id="Q9UBP0"/>
<dbReference type="ChEMBL" id="CHEMBL5169203"/>
<dbReference type="TCDB" id="1.R.1.1.1">
    <property type="family name" value="the membrane contact site (mcs) family"/>
</dbReference>
<dbReference type="GlyGen" id="Q9UBP0">
    <property type="glycosylation" value="2 sites, 1 N-linked glycan (1 site), 1 O-linked glycan (1 site)"/>
</dbReference>
<dbReference type="iPTMnet" id="Q9UBP0"/>
<dbReference type="PhosphoSitePlus" id="Q9UBP0"/>
<dbReference type="BioMuta" id="SPAST"/>
<dbReference type="DMDM" id="12230611"/>
<dbReference type="jPOST" id="Q9UBP0"/>
<dbReference type="MassIVE" id="Q9UBP0"/>
<dbReference type="PaxDb" id="9606-ENSP00000480893"/>
<dbReference type="PeptideAtlas" id="Q9UBP0"/>
<dbReference type="ProteomicsDB" id="84020">
    <molecule id="Q9UBP0-1"/>
</dbReference>
<dbReference type="ProteomicsDB" id="84021">
    <molecule id="Q9UBP0-2"/>
</dbReference>
<dbReference type="ProteomicsDB" id="84022">
    <molecule id="Q9UBP0-3"/>
</dbReference>
<dbReference type="ProteomicsDB" id="84023">
    <molecule id="Q9UBP0-4"/>
</dbReference>
<dbReference type="Pumba" id="Q9UBP0"/>
<dbReference type="Antibodypedia" id="2246">
    <property type="antibodies" value="261 antibodies from 31 providers"/>
</dbReference>
<dbReference type="DNASU" id="6683"/>
<dbReference type="Ensembl" id="ENST00000315285.9">
    <molecule id="Q9UBP0-1"/>
    <property type="protein sequence ID" value="ENSP00000320885.3"/>
    <property type="gene ID" value="ENSG00000021574.15"/>
</dbReference>
<dbReference type="Ensembl" id="ENST00000642999.1">
    <molecule id="Q9UBP0-3"/>
    <property type="protein sequence ID" value="ENSP00000496589.1"/>
    <property type="gene ID" value="ENSG00000021574.15"/>
</dbReference>
<dbReference type="Ensembl" id="ENST00000644954.1">
    <molecule id="Q9UBP0-4"/>
    <property type="protein sequence ID" value="ENSP00000494312.1"/>
    <property type="gene ID" value="ENSG00000021574.15"/>
</dbReference>
<dbReference type="Ensembl" id="ENST00000646571.1">
    <molecule id="Q9UBP0-2"/>
    <property type="protein sequence ID" value="ENSP00000495015.1"/>
    <property type="gene ID" value="ENSG00000021574.15"/>
</dbReference>
<dbReference type="GeneID" id="6683"/>
<dbReference type="KEGG" id="hsa:6683"/>
<dbReference type="MANE-Select" id="ENST00000315285.9">
    <property type="protein sequence ID" value="ENSP00000320885.3"/>
    <property type="RefSeq nucleotide sequence ID" value="NM_014946.4"/>
    <property type="RefSeq protein sequence ID" value="NP_055761.2"/>
</dbReference>
<dbReference type="UCSC" id="uc002roc.4">
    <molecule id="Q9UBP0-1"/>
    <property type="organism name" value="human"/>
</dbReference>
<dbReference type="AGR" id="HGNC:11233"/>
<dbReference type="CTD" id="6683"/>
<dbReference type="DisGeNET" id="6683"/>
<dbReference type="GeneCards" id="SPAST"/>
<dbReference type="GeneReviews" id="SPAST"/>
<dbReference type="HGNC" id="HGNC:11233">
    <property type="gene designation" value="SPAST"/>
</dbReference>
<dbReference type="HPA" id="ENSG00000021574">
    <property type="expression patterns" value="Low tissue specificity"/>
</dbReference>
<dbReference type="MalaCards" id="SPAST"/>
<dbReference type="MIM" id="182601">
    <property type="type" value="phenotype"/>
</dbReference>
<dbReference type="MIM" id="604277">
    <property type="type" value="gene"/>
</dbReference>
<dbReference type="neXtProt" id="NX_Q9UBP0"/>
<dbReference type="OpenTargets" id="ENSG00000021574"/>
<dbReference type="Orphanet" id="100985">
    <property type="disease" value="Autosomal dominant spastic paraplegia type 4"/>
</dbReference>
<dbReference type="PharmGKB" id="PA36063"/>
<dbReference type="VEuPathDB" id="HostDB:ENSG00000021574"/>
<dbReference type="eggNOG" id="KOG0740">
    <property type="taxonomic scope" value="Eukaryota"/>
</dbReference>
<dbReference type="GeneTree" id="ENSGT00940000156258"/>
<dbReference type="HOGENOM" id="CLU_000688_21_5_1"/>
<dbReference type="InParanoid" id="Q9UBP0"/>
<dbReference type="OMA" id="KSREPML"/>
<dbReference type="OrthoDB" id="10251136at2759"/>
<dbReference type="PAN-GO" id="Q9UBP0">
    <property type="GO annotations" value="0 GO annotations based on evolutionary models"/>
</dbReference>
<dbReference type="PhylomeDB" id="Q9UBP0"/>
<dbReference type="TreeFam" id="TF105014"/>
<dbReference type="BRENDA" id="5.6.1.1">
    <property type="organism ID" value="2681"/>
</dbReference>
<dbReference type="PathwayCommons" id="Q9UBP0"/>
<dbReference type="Reactome" id="R-HSA-9668328">
    <property type="pathway name" value="Sealing of the nuclear envelope (NE) by ESCRT-III"/>
</dbReference>
<dbReference type="SABIO-RK" id="Q9UBP0"/>
<dbReference type="SignaLink" id="Q9UBP0"/>
<dbReference type="SIGNOR" id="Q9UBP0"/>
<dbReference type="BioGRID-ORCS" id="6683">
    <property type="hits" value="23 hits in 1159 CRISPR screens"/>
</dbReference>
<dbReference type="CD-CODE" id="8C2F96ED">
    <property type="entry name" value="Centrosome"/>
</dbReference>
<dbReference type="ChiTaRS" id="SPAST">
    <property type="organism name" value="human"/>
</dbReference>
<dbReference type="EvolutionaryTrace" id="Q9UBP0"/>
<dbReference type="GeneWiki" id="Spastin"/>
<dbReference type="GenomeRNAi" id="6683"/>
<dbReference type="Pharos" id="Q9UBP0">
    <property type="development level" value="Tbio"/>
</dbReference>
<dbReference type="PRO" id="PR:Q9UBP0"/>
<dbReference type="Proteomes" id="UP000005640">
    <property type="component" value="Chromosome 2"/>
</dbReference>
<dbReference type="RNAct" id="Q9UBP0">
    <property type="molecule type" value="protein"/>
</dbReference>
<dbReference type="Bgee" id="ENSG00000021574">
    <property type="expression patterns" value="Expressed in cortical plate and 198 other cell types or tissues"/>
</dbReference>
<dbReference type="ExpressionAtlas" id="Q9UBP0">
    <property type="expression patterns" value="baseline and differential"/>
</dbReference>
<dbReference type="GO" id="GO:0030424">
    <property type="term" value="C:axon"/>
    <property type="evidence" value="ECO:0000314"/>
    <property type="project" value="UniProtKB"/>
</dbReference>
<dbReference type="GO" id="GO:1904115">
    <property type="term" value="C:axon cytoplasm"/>
    <property type="evidence" value="ECO:0007669"/>
    <property type="project" value="GOC"/>
</dbReference>
<dbReference type="GO" id="GO:0005813">
    <property type="term" value="C:centrosome"/>
    <property type="evidence" value="ECO:0000314"/>
    <property type="project" value="UniProtKB"/>
</dbReference>
<dbReference type="GO" id="GO:0005737">
    <property type="term" value="C:cytoplasm"/>
    <property type="evidence" value="ECO:0000314"/>
    <property type="project" value="UniProtKB"/>
</dbReference>
<dbReference type="GO" id="GO:0031410">
    <property type="term" value="C:cytoplasmic vesicle"/>
    <property type="evidence" value="ECO:0000314"/>
    <property type="project" value="MGI"/>
</dbReference>
<dbReference type="GO" id="GO:0005829">
    <property type="term" value="C:cytosol"/>
    <property type="evidence" value="ECO:0000314"/>
    <property type="project" value="HPA"/>
</dbReference>
<dbReference type="GO" id="GO:0005789">
    <property type="term" value="C:endoplasmic reticulum membrane"/>
    <property type="evidence" value="ECO:0007669"/>
    <property type="project" value="UniProtKB-SubCell"/>
</dbReference>
<dbReference type="GO" id="GO:0071782">
    <property type="term" value="C:endoplasmic reticulum tubular network"/>
    <property type="evidence" value="ECO:0000314"/>
    <property type="project" value="UniProtKB"/>
</dbReference>
<dbReference type="GO" id="GO:0005768">
    <property type="term" value="C:endosome"/>
    <property type="evidence" value="ECO:0007669"/>
    <property type="project" value="UniProtKB-SubCell"/>
</dbReference>
<dbReference type="GO" id="GO:0070062">
    <property type="term" value="C:extracellular exosome"/>
    <property type="evidence" value="ECO:0007005"/>
    <property type="project" value="UniProtKB"/>
</dbReference>
<dbReference type="GO" id="GO:0005811">
    <property type="term" value="C:lipid droplet"/>
    <property type="evidence" value="ECO:0007669"/>
    <property type="project" value="UniProtKB-SubCell"/>
</dbReference>
<dbReference type="GO" id="GO:0005874">
    <property type="term" value="C:microtubule"/>
    <property type="evidence" value="ECO:0007669"/>
    <property type="project" value="UniProtKB-UniRule"/>
</dbReference>
<dbReference type="GO" id="GO:0030496">
    <property type="term" value="C:midbody"/>
    <property type="evidence" value="ECO:0000314"/>
    <property type="project" value="UniProtKB"/>
</dbReference>
<dbReference type="GO" id="GO:0031965">
    <property type="term" value="C:nuclear membrane"/>
    <property type="evidence" value="ECO:0000314"/>
    <property type="project" value="UniProtKB"/>
</dbReference>
<dbReference type="GO" id="GO:0005654">
    <property type="term" value="C:nucleoplasm"/>
    <property type="evidence" value="ECO:0000314"/>
    <property type="project" value="HPA"/>
</dbReference>
<dbReference type="GO" id="GO:0005634">
    <property type="term" value="C:nucleus"/>
    <property type="evidence" value="ECO:0000314"/>
    <property type="project" value="UniProtKB"/>
</dbReference>
<dbReference type="GO" id="GO:0048471">
    <property type="term" value="C:perinuclear region of cytoplasm"/>
    <property type="evidence" value="ECO:0000314"/>
    <property type="project" value="UniProtKB"/>
</dbReference>
<dbReference type="GO" id="GO:0000922">
    <property type="term" value="C:spindle pole"/>
    <property type="evidence" value="ECO:0000314"/>
    <property type="project" value="UniProtKB"/>
</dbReference>
<dbReference type="GO" id="GO:0043014">
    <property type="term" value="F:alpha-tubulin binding"/>
    <property type="evidence" value="ECO:0000353"/>
    <property type="project" value="UniProtKB"/>
</dbReference>
<dbReference type="GO" id="GO:0005524">
    <property type="term" value="F:ATP binding"/>
    <property type="evidence" value="ECO:0007669"/>
    <property type="project" value="UniProtKB-UniRule"/>
</dbReference>
<dbReference type="GO" id="GO:0016887">
    <property type="term" value="F:ATP hydrolysis activity"/>
    <property type="evidence" value="ECO:0000318"/>
    <property type="project" value="GO_Central"/>
</dbReference>
<dbReference type="GO" id="GO:0048487">
    <property type="term" value="F:beta-tubulin binding"/>
    <property type="evidence" value="ECO:0000314"/>
    <property type="project" value="UniProtKB"/>
</dbReference>
<dbReference type="GO" id="GO:0008017">
    <property type="term" value="F:microtubule binding"/>
    <property type="evidence" value="ECO:0000314"/>
    <property type="project" value="UniProtKB"/>
</dbReference>
<dbReference type="GO" id="GO:0008568">
    <property type="term" value="F:microtubule severing ATPase activity"/>
    <property type="evidence" value="ECO:0000314"/>
    <property type="project" value="UniProtKB"/>
</dbReference>
<dbReference type="GO" id="GO:0044877">
    <property type="term" value="F:protein-containing complex binding"/>
    <property type="evidence" value="ECO:0000304"/>
    <property type="project" value="ARUK-UCL"/>
</dbReference>
<dbReference type="GO" id="GO:0008089">
    <property type="term" value="P:anterograde axonal transport"/>
    <property type="evidence" value="ECO:0000250"/>
    <property type="project" value="UniProtKB"/>
</dbReference>
<dbReference type="GO" id="GO:0019896">
    <property type="term" value="P:axonal transport of mitochondrion"/>
    <property type="evidence" value="ECO:0000250"/>
    <property type="project" value="UniProtKB"/>
</dbReference>
<dbReference type="GO" id="GO:0007409">
    <property type="term" value="P:axonogenesis"/>
    <property type="evidence" value="ECO:0007669"/>
    <property type="project" value="UniProtKB-UniRule"/>
</dbReference>
<dbReference type="GO" id="GO:0032506">
    <property type="term" value="P:cytokinetic process"/>
    <property type="evidence" value="ECO:0000315"/>
    <property type="project" value="UniProtKB"/>
</dbReference>
<dbReference type="GO" id="GO:0061640">
    <property type="term" value="P:cytoskeleton-dependent cytokinesis"/>
    <property type="evidence" value="ECO:0000304"/>
    <property type="project" value="ARUK-UCL"/>
</dbReference>
<dbReference type="GO" id="GO:0006888">
    <property type="term" value="P:endoplasmic reticulum to Golgi vesicle-mediated transport"/>
    <property type="evidence" value="ECO:0000315"/>
    <property type="project" value="UniProtKB"/>
</dbReference>
<dbReference type="GO" id="GO:0010458">
    <property type="term" value="P:exit from mitosis"/>
    <property type="evidence" value="ECO:0000315"/>
    <property type="project" value="UniProtKB"/>
</dbReference>
<dbReference type="GO" id="GO:0090148">
    <property type="term" value="P:membrane fission"/>
    <property type="evidence" value="ECO:0000315"/>
    <property type="project" value="UniProtKB"/>
</dbReference>
<dbReference type="GO" id="GO:0001578">
    <property type="term" value="P:microtubule bundle formation"/>
    <property type="evidence" value="ECO:0000314"/>
    <property type="project" value="UniProtKB"/>
</dbReference>
<dbReference type="GO" id="GO:0051013">
    <property type="term" value="P:microtubule severing"/>
    <property type="evidence" value="ECO:0000314"/>
    <property type="project" value="UniProtKB"/>
</dbReference>
<dbReference type="GO" id="GO:0000281">
    <property type="term" value="P:mitotic cytokinesis"/>
    <property type="evidence" value="ECO:0000315"/>
    <property type="project" value="UniProtKB"/>
</dbReference>
<dbReference type="GO" id="GO:0007084">
    <property type="term" value="P:mitotic nuclear membrane reassembly"/>
    <property type="evidence" value="ECO:0000304"/>
    <property type="project" value="Reactome"/>
</dbReference>
<dbReference type="GO" id="GO:0051228">
    <property type="term" value="P:mitotic spindle disassembly"/>
    <property type="evidence" value="ECO:0000315"/>
    <property type="project" value="UniProtKB"/>
</dbReference>
<dbReference type="GO" id="GO:0031468">
    <property type="term" value="P:nuclear membrane reassembly"/>
    <property type="evidence" value="ECO:0000315"/>
    <property type="project" value="UniProtKB"/>
</dbReference>
<dbReference type="GO" id="GO:0032467">
    <property type="term" value="P:positive regulation of cytokinesis"/>
    <property type="evidence" value="ECO:0000315"/>
    <property type="project" value="UniProtKB"/>
</dbReference>
<dbReference type="GO" id="GO:0031117">
    <property type="term" value="P:positive regulation of microtubule depolymerization"/>
    <property type="evidence" value="ECO:0007669"/>
    <property type="project" value="UniProtKB-UniRule"/>
</dbReference>
<dbReference type="GO" id="GO:0034214">
    <property type="term" value="P:protein hexamerization"/>
    <property type="evidence" value="ECO:0000314"/>
    <property type="project" value="UniProtKB"/>
</dbReference>
<dbReference type="GO" id="GO:0051260">
    <property type="term" value="P:protein homooligomerization"/>
    <property type="evidence" value="ECO:0000314"/>
    <property type="project" value="UniProtKB"/>
</dbReference>
<dbReference type="CDD" id="cd02679">
    <property type="entry name" value="MIT_spastin"/>
    <property type="match status" value="1"/>
</dbReference>
<dbReference type="CDD" id="cd19524">
    <property type="entry name" value="RecA-like_spastin"/>
    <property type="match status" value="1"/>
</dbReference>
<dbReference type="FunFam" id="3.40.50.300:FF:000093">
    <property type="entry name" value="Fidgetin-like 1"/>
    <property type="match status" value="1"/>
</dbReference>
<dbReference type="FunFam" id="1.10.8.60:FF:000036">
    <property type="entry name" value="Spastin"/>
    <property type="match status" value="1"/>
</dbReference>
<dbReference type="FunFam" id="1.20.58.80:FF:000006">
    <property type="entry name" value="Spastin"/>
    <property type="match status" value="1"/>
</dbReference>
<dbReference type="Gene3D" id="1.10.8.60">
    <property type="match status" value="1"/>
</dbReference>
<dbReference type="Gene3D" id="3.40.50.300">
    <property type="entry name" value="P-loop containing nucleotide triphosphate hydrolases"/>
    <property type="match status" value="1"/>
</dbReference>
<dbReference type="Gene3D" id="1.20.58.80">
    <property type="entry name" value="Phosphotransferase system, lactose/cellobiose-type IIA subunit"/>
    <property type="match status" value="1"/>
</dbReference>
<dbReference type="HAMAP" id="MF_03021">
    <property type="entry name" value="Spastin"/>
    <property type="match status" value="1"/>
</dbReference>
<dbReference type="InterPro" id="IPR003593">
    <property type="entry name" value="AAA+_ATPase"/>
</dbReference>
<dbReference type="InterPro" id="IPR041569">
    <property type="entry name" value="AAA_lid_3"/>
</dbReference>
<dbReference type="InterPro" id="IPR003959">
    <property type="entry name" value="ATPase_AAA_core"/>
</dbReference>
<dbReference type="InterPro" id="IPR003960">
    <property type="entry name" value="ATPase_AAA_CS"/>
</dbReference>
<dbReference type="InterPro" id="IPR007330">
    <property type="entry name" value="MIT_dom"/>
</dbReference>
<dbReference type="InterPro" id="IPR050304">
    <property type="entry name" value="MT-severing_AAA_ATPase"/>
</dbReference>
<dbReference type="InterPro" id="IPR027417">
    <property type="entry name" value="P-loop_NTPase"/>
</dbReference>
<dbReference type="InterPro" id="IPR015415">
    <property type="entry name" value="Spast_Vps4_C"/>
</dbReference>
<dbReference type="InterPro" id="IPR017179">
    <property type="entry name" value="Spastin"/>
</dbReference>
<dbReference type="InterPro" id="IPR035106">
    <property type="entry name" value="Spastin_chordate"/>
</dbReference>
<dbReference type="PANTHER" id="PTHR23074">
    <property type="entry name" value="AAA DOMAIN-CONTAINING"/>
    <property type="match status" value="1"/>
</dbReference>
<dbReference type="PANTHER" id="PTHR23074:SF86">
    <property type="entry name" value="SPASTIN"/>
    <property type="match status" value="1"/>
</dbReference>
<dbReference type="Pfam" id="PF00004">
    <property type="entry name" value="AAA"/>
    <property type="match status" value="1"/>
</dbReference>
<dbReference type="Pfam" id="PF17862">
    <property type="entry name" value="AAA_lid_3"/>
    <property type="match status" value="1"/>
</dbReference>
<dbReference type="Pfam" id="PF09336">
    <property type="entry name" value="Vps4_C"/>
    <property type="match status" value="1"/>
</dbReference>
<dbReference type="PIRSF" id="PIRSF037338">
    <property type="entry name" value="Spastin"/>
    <property type="match status" value="1"/>
</dbReference>
<dbReference type="SMART" id="SM00382">
    <property type="entry name" value="AAA"/>
    <property type="match status" value="1"/>
</dbReference>
<dbReference type="SMART" id="SM00745">
    <property type="entry name" value="MIT"/>
    <property type="match status" value="1"/>
</dbReference>
<dbReference type="SUPFAM" id="SSF52540">
    <property type="entry name" value="P-loop containing nucleoside triphosphate hydrolases"/>
    <property type="match status" value="1"/>
</dbReference>
<dbReference type="PROSITE" id="PS00674">
    <property type="entry name" value="AAA"/>
    <property type="match status" value="1"/>
</dbReference>
<accession>Q9UBP0</accession>
<accession>A7E2A7</accession>
<accession>Q9UPR9</accession>
<sequence length="616" mass="67197">MNSPGGRGKKKGSGGASNPVPPRPPPPCLAPAPPAAGPAPPPESPHKRNLYYFSYPLFVGFALLRLVAFHLGLLFVWLCQRFSRALMAAKRSSGAAPAPASASAPAPVPGGEAERVRVFHKQAFEYISIALRIDEDEKAGQKEQAVEWYKKGIEELEKGIAVIVTGQGEQCERARRLQAKMMTNLVMAKDRLQLLEKMQPVLPFSKSQTDVYNDSTNLACRNGHLQSESGAVPKRKDPLTHTSNSLPRSKTVMKTGSAGLSGHHRAPSYSGLSMVSGVKQGSGPAPTTHKGTPKTNRTNKPSTPTTATRKKKDLKNFRNVDSNLANLIMNEIVDNGTAVKFDDIAGQDLAKQALQEIVILPSLRPELFTGLRAPARGLLLFGPPGNGKTMLAKAVAAESNATFFNISAASLTSKYVGEGEKLVRALFAVARELQPSIIFIDEVDSLLCERREGEHDASRRLKTEFLIEFDGVQSAGDDRVLVMGATNRPQELDEAVLRRFIKRVYVSLPNEETRLLLLKNLLCKQGSPLTQKELAQLARMTDGYSGSDLTALAKDAALGPIRELKPEQVKNMSASEMRNIRLSDFTESLKKIKRSVSPQTLEAYIRWNKDFGDTTV</sequence>
<organism>
    <name type="scientific">Homo sapiens</name>
    <name type="common">Human</name>
    <dbReference type="NCBI Taxonomy" id="9606"/>
    <lineage>
        <taxon>Eukaryota</taxon>
        <taxon>Metazoa</taxon>
        <taxon>Chordata</taxon>
        <taxon>Craniata</taxon>
        <taxon>Vertebrata</taxon>
        <taxon>Euteleostomi</taxon>
        <taxon>Mammalia</taxon>
        <taxon>Eutheria</taxon>
        <taxon>Euarchontoglires</taxon>
        <taxon>Primates</taxon>
        <taxon>Haplorrhini</taxon>
        <taxon>Catarrhini</taxon>
        <taxon>Hominidae</taxon>
        <taxon>Homo</taxon>
    </lineage>
</organism>
<proteinExistence type="evidence at protein level"/>
<comment type="function">
    <text evidence="2 10 30 33 41 46 49 54 58 63 70 71">ATP-dependent microtubule severing protein that specifically recognizes and cuts microtubules that are polyglutamylated (PubMed:11809724, PubMed:15716377, PubMed:16219033, PubMed:17389232, PubMed:20530212, PubMed:22637577, PubMed:26875866). Preferentially recognizes and acts on microtubules decorated with short polyglutamate tails: severing activity increases as the number of glutamates per tubulin rises from one to eight, but decreases beyond this glutamylation threshold (PubMed:26875866). Severing activity is not dependent on tubulin acetylation or detyrosination (PubMed:26875866). Microtubule severing promotes reorganization of cellular microtubule arrays and the release of microtubules from the centrosome following nucleation. It is critical for the biogenesis and maintenance of complex microtubule arrays in axons, spindles and cilia. SPAST is involved in abscission step of cytokinesis and nuclear envelope reassembly during anaphase in cooperation with the ESCRT-III complex (PubMed:19000169, PubMed:21310966, PubMed:26040712). Recruited at the midbody, probably by IST1, and participates in membrane fission during abscission together with the ESCRT-III complex (PubMed:21310966). Recruited to the nuclear membrane by IST1 and mediates microtubule severing, promoting nuclear envelope sealing and mitotic spindle disassembly during late anaphase (PubMed:26040712). Required for membrane traffic from the endoplasmic reticulum (ER) to the Golgi and endosome recycling (PubMed:23897888). Recruited by IST1 to endosomes and regulates early endosomal tubulation and recycling by mediating microtubule severing (PubMed:23897888). Probably plays a role in axon growth and the formation of axonal branches (PubMed:15716377).</text>
</comment>
<comment type="function">
    <molecule>Isoform 1</molecule>
    <text evidence="69">Involved in lipid metabolism by regulating the size and distribution of lipid droplets.</text>
</comment>
<comment type="catalytic activity">
    <reaction evidence="2 30 33 38 41 43 58">
        <text>n ATP + n H2O + a microtubule = n ADP + n phosphate + (n+1) alpha/beta tubulin heterodimers.</text>
        <dbReference type="EC" id="5.6.1.1"/>
    </reaction>
</comment>
<comment type="activity regulation">
    <text evidence="2 58 62">Allosteric enzyme with a cooperative mechanism; at least two neighbor subunits influence each other strongly in spastin hexamers (PubMed:22637577). Microtubule binding promotes cooperative interactions among spastin subunits (PubMed:22637577). ATP-bound enzyme interacts strongly and cooperatively with microtubules; this interaction stimulates ATP hydrolysis (PubMed:23745751).</text>
</comment>
<comment type="biophysicochemical properties">
    <kinetics>
        <KM evidence="30 41 58">0.45 mM for ATP</KM>
        <Vmax evidence="30 41 58">1.2 nmol/min/ug enzyme</Vmax>
        <text evidence="58">Kinetic parameters shown are for full-length enzyme. N-terminally truncated spastin (residues 228-616), which has been shown to exhibit full severing activity, shows a basal ATP turnover rate of 0.78 sec(-1) in the absence of microtubules, a KM of 0.16 mM for ATP, and the ATP turnover rate is extrapolated to 3.83 sec(-1) in the presence of microtubules. ATPase activity shows non-Michaelis-Menten kinetics in the presence of microtubules, but is close to non-cooperative behavior in their absence (PubMed:22637577).</text>
    </kinetics>
</comment>
<comment type="subunit">
    <text evidence="2 25 28 30 34 35 38 39 41 45 47 56 58 60 63 64 67 70">Homohexamer (PubMed:17389232, PubMed:22637577). Mostly monomeric, but assembles into hexameric structure for short periods of time. Oligomerization seems to be a prerequisite for catalytic activity (PubMed:17389232, PubMed:22637577). Binding to ATP in a cleft between two adjacent subunits stabilizes the homohexameric form (PubMed:17389232, PubMed:22637577). Binds to microtubules at least in part via the alpha-tubulin and beta-tubulin tails (PubMed:15269182, PubMed:15716377, PubMed:23272056). The hexamer adopts a ring conformation through which microtubules pass prior to being severed (PubMed:17389232, PubMed:22637577). Does not interact strongly with tubulin heterodimers (PubMed:15269182, PubMed:15716377, PubMed:23272056). Interacts (via MIT domain) with CHMP1B; the interaction is direct (PubMed:15537668, PubMed:18997780). Interacts with SSNA1 (PubMed:15269182, PubMed:25390646). Interacts with ATL1 (PubMed:16339213, PubMed:16815977). Interacts with RTN1 (PubMed:16602018). Interacts with ZFYVE27 (PubMed:16826525, PubMed:23969831). Isoform 1 but not isoform 3 interacts with RTN2 (PubMed:22232211). Interacts with REEP1 (PubMed:20200447). Interacts (via MIT domain) with IST1 (PubMed:23897888, PubMed:26040712).</text>
</comment>
<comment type="interaction">
    <interactant intactId="EBI-1222832">
        <id>Q9UBP0</id>
    </interactant>
    <interactant intactId="EBI-15590227">
        <id>Q8WXF7-1</id>
        <label>ATL1</label>
    </interactant>
    <organismsDiffer>false</organismsDiffer>
    <experiments>4</experiments>
</comment>
<comment type="interaction">
    <interactant intactId="EBI-1222832">
        <id>Q9UBP0</id>
    </interactant>
    <interactant intactId="EBI-8835653">
        <id>Q9UF56</id>
        <label>FBXL17</label>
    </interactant>
    <organismsDiffer>false</organismsDiffer>
    <experiments>3</experiments>
</comment>
<comment type="interaction">
    <interactant intactId="EBI-1222832">
        <id>Q9UBP0</id>
    </interactant>
    <interactant intactId="EBI-3892947">
        <id>Q5T4F4</id>
        <label>ZFYVE27</label>
    </interactant>
    <organismsDiffer>false</organismsDiffer>
    <experiments>3</experiments>
</comment>
<comment type="interaction">
    <interactant intactId="EBI-36485974">
        <id>Q9UBP0-1</id>
    </interactant>
    <interactant intactId="EBI-8835653">
        <id>Q9UF56</id>
        <label>FBXL17</label>
    </interactant>
    <organismsDiffer>false</organismsDiffer>
    <experiments>4</experiments>
</comment>
<comment type="subcellular location">
    <subcellularLocation>
        <location evidence="2 46">Membrane</location>
        <topology evidence="2 80">Peripheral membrane protein</topology>
    </subcellularLocation>
    <subcellularLocation>
        <location evidence="2 35">Endoplasmic reticulum</location>
    </subcellularLocation>
    <subcellularLocation>
        <location evidence="2 45 54 67">Midbody</location>
    </subcellularLocation>
    <subcellularLocation>
        <location evidence="2 25 31 67">Cytoplasm</location>
        <location evidence="2 25 31 67">Cytoskeleton</location>
        <location evidence="2 25 31 67">Microtubule organizing center</location>
        <location evidence="2 25 31 67">Centrosome</location>
    </subcellularLocation>
    <subcellularLocation>
        <location evidence="2 30 41 43 46 47">Cytoplasm</location>
        <location evidence="2 30 41 43 46 47">Cytoskeleton</location>
    </subcellularLocation>
    <subcellularLocation>
        <location evidence="2 10 21 25 28">Cytoplasm</location>
        <location evidence="2 10 21 25 28">Perinuclear region</location>
    </subcellularLocation>
    <subcellularLocation>
        <location evidence="2 21 25 32">Nucleus</location>
    </subcellularLocation>
    <subcellularLocation>
        <location evidence="2 25">Cytoplasm</location>
        <location evidence="2 25">Cytoskeleton</location>
        <location evidence="2 25">Spindle</location>
    </subcellularLocation>
    <subcellularLocation>
        <location evidence="2 32 47">Cytoplasm</location>
    </subcellularLocation>
    <subcellularLocation>
        <location evidence="25">Cell projection</location>
        <location evidence="25">Axon</location>
    </subcellularLocation>
    <text evidence="2 25 31 45 80">Forms an intramembrane hairpin-like structure in the membrane (PubMed:20200447). Localization to the centrosome is independent of microtubules (PubMed:15891913). Localizes to the midbody of dividing cells, and this requires CHMP1B (PubMed:18997780). Enriched in the distal axons and branches of postmitotic neurons (PubMed:15269182). Mainly nuclear in interphase cells and becomes associated with the centrosomes, spindle microtubules, midzone and finally the midbody during cell division (PubMed:15269182).</text>
</comment>
<comment type="subcellular location">
    <molecule>Isoform 1</molecule>
    <subcellularLocation>
        <location evidence="46 64">Endoplasmic reticulum membrane</location>
        <topology evidence="80">Peripheral membrane protein</topology>
    </subcellularLocation>
    <subcellularLocation>
        <location evidence="70">Nucleus membrane</location>
    </subcellularLocation>
    <subcellularLocation>
        <location evidence="69">Lipid droplet</location>
    </subcellularLocation>
    <subcellularLocation>
        <location evidence="46 47">Cytoplasm</location>
        <location evidence="46 47">Cytoskeleton</location>
    </subcellularLocation>
    <subcellularLocation>
        <location evidence="63">Endosome</location>
    </subcellularLocation>
    <text evidence="64 70 80">Forms an intramembrane hairpin-like structure in the membrane (PubMed:20200447). Recruited to nuclear membrane by IST1 during late anaphase (PubMed:26040712). Localizes to endoplasmic reticulum tubular network (PubMed:23969831).</text>
</comment>
<comment type="subcellular location">
    <molecule>Isoform 3</molecule>
    <subcellularLocation>
        <location evidence="47 64">Cytoplasm</location>
    </subcellularLocation>
    <subcellularLocation>
        <location evidence="46 63">Endosome</location>
    </subcellularLocation>
    <subcellularLocation>
        <location evidence="32 70">Nucleus membrane</location>
    </subcellularLocation>
    <subcellularLocation>
        <location evidence="67">Cytoplasm</location>
        <location evidence="67">Cytoskeleton</location>
        <location evidence="67">Microtubule organizing center</location>
        <location evidence="67">Centrosome</location>
    </subcellularLocation>
    <text evidence="46 70">Constitutes the main endosomal form (PubMed:19000169). Recruited to nuclear membrane by IST1 during late anaphase (PubMed:26040712).</text>
</comment>
<comment type="alternative products">
    <event type="alternative promoter"/>
    <event type="alternative splicing"/>
    <event type="alternative initiation"/>
    <isoform>
        <id>Q9UBP0-1</id>
        <name>1</name>
        <name>Long</name>
        <name>Long variant 1</name>
        <name evidence="76">68 kDa</name>
        <name evidence="77">M1</name>
        <sequence type="displayed"/>
    </isoform>
    <isoform>
        <id>Q9UBP0-2</id>
        <name>2</name>
        <name>Long variant 2</name>
        <sequence type="described" ref="VSP_000024"/>
    </isoform>
    <isoform>
        <id>Q9UBP0-3</id>
        <name>3</name>
        <name>Short</name>
        <name>Short variant 1</name>
        <name evidence="76">60 kDa</name>
        <name evidence="77">M87</name>
        <sequence type="described" ref="VSP_036650"/>
    </isoform>
    <isoform>
        <id>Q9UBP0-4</id>
        <name>4</name>
        <name>Short variant 2</name>
        <sequence type="described" ref="VSP_036650 VSP_000024"/>
    </isoform>
    <text evidence="32 44">Alternative promoter usage of a cryptic promoter in exon 1 can direct the synthesis of N-terminally truncated isoforms, which may also arise from alternative initiation.</text>
</comment>
<comment type="tissue specificity">
    <text evidence="4">Expressed in brain, heart, kidney, liver, lung, pancreas, placenta and skeletal muscle. The short isoforms may predominate in brain and spinal cord.</text>
</comment>
<comment type="developmental stage">
    <text evidence="4">Expressed in fetal brain, heart, kidney, liver, lung, skeletal muscle, spleen and thymus.</text>
</comment>
<comment type="disease" evidence="4 5 6 7 8 9 10 11 12 13 14 15 16 17 18 19 20 22 23 24 26 27 29 30 31 34 36 37 41 42 46 48 50 51 52 53 55 59 61 65 66 68 72">
    <disease id="DI-01036">
        <name>Spastic paraplegia 4, autosomal dominant</name>
        <acronym>SPG4</acronym>
        <description>A form of spastic paraplegia, a neurodegenerative disorder characterized by a slow, gradual, progressive weakness and spasticity of the lower limbs. Rate of progression and the severity of symptoms are quite variable. Initial symptoms may include difficulty with balance, weakness and stiffness in the legs, muscle spasms, and dragging the toes when walking. In some forms of the disorder, bladder symptoms (such as incontinence) may appear, or the weakness and stiffness may spread to other parts of the body.</description>
        <dbReference type="MIM" id="182601"/>
    </disease>
    <text>The disease is caused by variants affecting the gene represented in this entry.</text>
</comment>
<comment type="miscellaneous">
    <molecule>Isoform 3</molecule>
    <text evidence="78">Produced by alternative promoter usage. May also be produced by alternative initiation at Met-87 of isoform 1. Major isoform.</text>
</comment>
<comment type="miscellaneous">
    <molecule>Isoform 4</molecule>
    <text evidence="78">Produced by alternative promoter usage and alternative splicing. May also be produced by alternative initiation at Met-87 of isoform 2.</text>
</comment>
<comment type="similarity">
    <text evidence="2">Belongs to the AAA ATPase family. Spastin subfamily.</text>
</comment>
<comment type="online information" name="Protein Spotlight">
    <link uri="https://www.proteinspotlight.org/back_issues/104"/>
    <text>The making of crooked - Issue 104 of April 2009</text>
</comment>
<protein>
    <recommendedName>
        <fullName evidence="2 74">Spastin</fullName>
        <ecNumber evidence="2 30 33 38 41 43 58">5.6.1.1</ecNumber>
    </recommendedName>
    <alternativeName>
        <fullName>Spastic paraplegia 4 protein</fullName>
    </alternativeName>
</protein>
<reference key="1">
    <citation type="journal article" date="1999" name="Nat. Genet.">
        <title>Spastin, a new AAA protein, is altered in the most frequent form of autosomal dominant spastic paraplegia.</title>
        <authorList>
            <person name="Hazan J."/>
            <person name="Fonknechten N."/>
            <person name="Mavel D."/>
            <person name="Paternotte C."/>
            <person name="Samson D."/>
            <person name="Artiguenave F."/>
            <person name="Davoine C.-S."/>
            <person name="Cruaud C."/>
            <person name="Durr A."/>
            <person name="Wincker P."/>
            <person name="Brottier P."/>
            <person name="Cattolico L."/>
            <person name="Barbe V."/>
            <person name="Burgunder J.-M."/>
            <person name="Prud'homme J.-F."/>
            <person name="Brice A."/>
            <person name="Fontaine B."/>
            <person name="Heilig R."/>
            <person name="Weissenbach J."/>
        </authorList>
    </citation>
    <scope>NUCLEOTIDE SEQUENCE [GENOMIC DNA / MRNA] (ISOFORM 1)</scope>
    <scope>TISSUE SPECIFICITY</scope>
    <scope>DEVELOPMENTAL STAGE</scope>
    <scope>VARIANTS SPG4 CYS-362; TYR-448 AND CYS-499</scope>
</reference>
<reference key="2">
    <citation type="journal article" date="1999" name="DNA Res.">
        <title>Prediction of the coding sequences of unidentified human genes. XIV. The complete sequences of 100 new cDNA clones from brain which code for large proteins in vitro.</title>
        <authorList>
            <person name="Kikuno R."/>
            <person name="Nagase T."/>
            <person name="Ishikawa K."/>
            <person name="Hirosawa M."/>
            <person name="Miyajima N."/>
            <person name="Tanaka A."/>
            <person name="Kotani H."/>
            <person name="Nomura N."/>
            <person name="Ohara O."/>
        </authorList>
    </citation>
    <scope>NUCLEOTIDE SEQUENCE [LARGE SCALE MRNA] (ISOFORM 2)</scope>
    <source>
        <tissue>Brain</tissue>
    </source>
</reference>
<reference key="3">
    <citation type="submission" date="2005-09" db="EMBL/GenBank/DDBJ databases">
        <authorList>
            <person name="Mural R.J."/>
            <person name="Istrail S."/>
            <person name="Sutton G.G."/>
            <person name="Florea L."/>
            <person name="Halpern A.L."/>
            <person name="Mobarry C.M."/>
            <person name="Lippert R."/>
            <person name="Walenz B."/>
            <person name="Shatkay H."/>
            <person name="Dew I."/>
            <person name="Miller J.R."/>
            <person name="Flanigan M.J."/>
            <person name="Edwards N.J."/>
            <person name="Bolanos R."/>
            <person name="Fasulo D."/>
            <person name="Halldorsson B.V."/>
            <person name="Hannenhalli S."/>
            <person name="Turner R."/>
            <person name="Yooseph S."/>
            <person name="Lu F."/>
            <person name="Nusskern D.R."/>
            <person name="Shue B.C."/>
            <person name="Zheng X.H."/>
            <person name="Zhong F."/>
            <person name="Delcher A.L."/>
            <person name="Huson D.H."/>
            <person name="Kravitz S.A."/>
            <person name="Mouchard L."/>
            <person name="Reinert K."/>
            <person name="Remington K.A."/>
            <person name="Clark A.G."/>
            <person name="Waterman M.S."/>
            <person name="Eichler E.E."/>
            <person name="Adams M.D."/>
            <person name="Hunkapiller M.W."/>
            <person name="Myers E.W."/>
            <person name="Venter J.C."/>
        </authorList>
    </citation>
    <scope>NUCLEOTIDE SEQUENCE [LARGE SCALE GENOMIC DNA]</scope>
</reference>
<reference key="4">
    <citation type="journal article" date="2004" name="Genome Res.">
        <title>The status, quality, and expansion of the NIH full-length cDNA project: the Mammalian Gene Collection (MGC).</title>
        <authorList>
            <consortium name="The MGC Project Team"/>
        </authorList>
    </citation>
    <scope>NUCLEOTIDE SEQUENCE [LARGE SCALE MRNA] (ISOFORM 2)</scope>
</reference>
<reference key="5">
    <citation type="journal article" date="2002" name="Hum. Mol. Genet.">
        <title>Spastin, the protein mutated in autosomal dominant hereditary spastic paraplegia, is involved in microtubule dynamics.</title>
        <authorList>
            <person name="Errico A."/>
            <person name="Ballabio A."/>
            <person name="Rugarli E.I."/>
        </authorList>
    </citation>
    <scope>FUNCTION</scope>
    <scope>SUBCELLULAR LOCATION</scope>
    <scope>CHARACTERIZATION OF VARIANTS SPG4 ARG-370; CYS-381; LYS-386; ARG-388; VAL-426; TYR-448; LEU-460; CYS-499 AND VAL-556</scope>
</reference>
<reference key="6">
    <citation type="journal article" date="2003" name="Genomics">
        <title>The identification of a conserved domain in both spartin and spastin, mutated in hereditary spastic paraplegia.</title>
        <authorList>
            <person name="Ciccarelli F.D."/>
            <person name="Proukakis C."/>
            <person name="Patel H."/>
            <person name="Cross H."/>
            <person name="Azam S."/>
            <person name="Patton M.A."/>
            <person name="Bork P."/>
            <person name="Crosby A.H."/>
        </authorList>
    </citation>
    <scope>DOMAIN MIT</scope>
    <scope>PROBABLE FUNCTION</scope>
</reference>
<reference key="7">
    <citation type="journal article" date="2004" name="Biochem. Biophys. Res. Commun.">
        <title>Identification of nuclear localisation sequences in spastin (SPG4) using a novel Tetra-GFP reporter system.</title>
        <authorList>
            <person name="Beetz C."/>
            <person name="Brodhun M."/>
            <person name="Moutzouris K."/>
            <person name="Kiehntopf M."/>
            <person name="Berndt A."/>
            <person name="Lehnert D."/>
            <person name="Deufel T."/>
            <person name="Bastmeyer M."/>
            <person name="Schickel J."/>
        </authorList>
    </citation>
    <scope>SUBCELLULAR LOCATION</scope>
    <scope>NUCLEAR LOCALIZATION SIGNAL</scope>
</reference>
<reference key="8">
    <citation type="journal article" date="2004" name="Hum. Mol. Genet.">
        <title>Spastin interacts with the centrosomal protein NA14, and is enriched in the spindle pole, the midbody and the distal axon.</title>
        <authorList>
            <person name="Errico A."/>
            <person name="Claudiani P."/>
            <person name="D'Addio M."/>
            <person name="Rugarli E.I."/>
        </authorList>
    </citation>
    <scope>INTERACTION WITH SSNA1 AND MICROTUBULES</scope>
    <scope>SUBCELLULAR LOCATION</scope>
</reference>
<reference key="9">
    <citation type="journal article" date="2005" name="Exp. Cell Res.">
        <title>Spastin subcellular localization is regulated through usage of different translation start sites and active export from the nucleus.</title>
        <authorList>
            <person name="Claudiani P."/>
            <person name="Riano E."/>
            <person name="Errico A."/>
            <person name="Andolfi G."/>
            <person name="Rugarli E.I."/>
        </authorList>
    </citation>
    <scope>ALTERNATIVE INITIATION</scope>
    <scope>SUBCELLULAR LOCATION</scope>
    <scope>NUCLEAR EXPORT SIGNALS</scope>
    <scope>MUTAGENESIS OF MET-1 AND MET-87</scope>
</reference>
<reference key="10">
    <citation type="journal article" date="2005" name="Hum. Mol. Genet.">
        <title>The hereditary spastic paraplegia protein spastin interacts with the ESCRT-III complex-associated endosomal protein CHMP1B.</title>
        <authorList>
            <person name="Reid E."/>
            <person name="Connell J.W."/>
            <person name="Edwards T.L."/>
            <person name="Duley S."/>
            <person name="Brown S.E."/>
            <person name="Sanderson C.M."/>
        </authorList>
    </citation>
    <scope>INTERACTION WITH CHMP1B</scope>
    <scope>SUBCELLULAR LOCATION</scope>
</reference>
<reference key="11">
    <citation type="journal article" date="2005" name="J. Cell Biol.">
        <title>Linking axonal degeneration to microtubule remodeling by Spastin-mediated microtubule severing.</title>
        <authorList>
            <person name="Evans K.J."/>
            <person name="Gomes E.R."/>
            <person name="Reisenweber S.M."/>
            <person name="Gundersen G.G."/>
            <person name="Lauring B.P."/>
        </authorList>
    </citation>
    <scope>FUNCTION</scope>
    <scope>CATALYTIC ACTIVITY</scope>
    <scope>BIOPHYSICOCHEMICAL PROPERTIES</scope>
    <scope>INTERACTION WITH MICROTUBULES</scope>
    <scope>SUBCELLULAR LOCATION</scope>
    <scope>MUTAGENESIS OF LYS-388 AND GLU-442</scope>
    <scope>CHARACTERIZATION OF VARIANTS SPG4 LYS-344; LYS-347; LYS-386; ARG-388 AND CYS-499</scope>
</reference>
<reference key="12">
    <citation type="journal article" date="2005" name="J. Neurochem.">
        <title>Human spastin has multiple microtubule-related functions.</title>
        <authorList>
            <person name="Salinas S."/>
            <person name="Carazo-Salas R.E."/>
            <person name="Proukakis C."/>
            <person name="Cooper J.M."/>
            <person name="Weston A.E."/>
            <person name="Schiavo G."/>
            <person name="Warner T.T."/>
        </authorList>
    </citation>
    <scope>FUNCTION</scope>
    <scope>CATALYTIC ACTIVITY</scope>
    <scope>ASSOCIATION WITH MICROTUBULES</scope>
</reference>
<reference key="13">
    <citation type="journal article" date="2005" name="Neurogenetics">
        <title>Subcellular localization of spastin: implications for the pathogenesis of hereditary spastic paraplegia.</title>
        <authorList>
            <person name="Svenson I.K."/>
            <person name="Kloos M.T."/>
            <person name="Jacon A."/>
            <person name="Gallione C."/>
            <person name="Horton A.C."/>
            <person name="Pericak-Vance M.A."/>
            <person name="Ehlers M.D."/>
            <person name="Marchuk D.A."/>
        </authorList>
    </citation>
    <scope>SUBCELLULAR LOCATION</scope>
    <scope>CHARACTERIZATION OF VARIANT SPG4 ARG-388</scope>
</reference>
<reference key="14">
    <citation type="journal article" date="2006" name="Am. J. Hum. Genet.">
        <title>ZFYVE27 (SPG33), a novel spastin-binding protein, is mutated in hereditary spastic paraplegia.</title>
        <authorList>
            <person name="Mannan A.U."/>
            <person name="Krawen P."/>
            <person name="Sauter S.M."/>
            <person name="Boehm J."/>
            <person name="Chronowska A."/>
            <person name="Paulus W."/>
            <person name="Neesen J."/>
            <person name="Engel W."/>
        </authorList>
    </citation>
    <scope>INTERACTION WITH ZFYVE27</scope>
</reference>
<reference key="15">
    <citation type="journal article" date="2006" name="Hum. Mol. Genet.">
        <title>Spastin and atlastin, two proteins mutated in autosomal-dominant hereditary spastic paraplegia, are binding partners.</title>
        <authorList>
            <person name="Sanderson C.M."/>
            <person name="Connell J.W."/>
            <person name="Edwards T.L."/>
            <person name="Bright N.A."/>
            <person name="Duley S."/>
            <person name="Thompson A."/>
            <person name="Luzio J.P."/>
            <person name="Reid E."/>
        </authorList>
    </citation>
    <scope>INTERACTION WITH ATL1</scope>
    <scope>CHARACTERIZATION OF VARIANT SPG4 ARG-388</scope>
</reference>
<reference key="16">
    <citation type="journal article" date="2006" name="Neurogenetics">
        <title>Spastin, the most commonly mutated protein in hereditary spastic paraplegia interacts with Reticulon 1 an endoplasmic reticulum protein.</title>
        <authorList>
            <person name="Mannan A.U."/>
            <person name="Boehm J."/>
            <person name="Sauter S.M."/>
            <person name="Rauber A."/>
            <person name="Byrne P.C."/>
            <person name="Neesen J."/>
            <person name="Engel W."/>
        </authorList>
    </citation>
    <scope>INTERACTION WITH RTN1</scope>
    <scope>SUBCELLULAR LOCATION</scope>
</reference>
<reference key="17">
    <citation type="journal article" date="2006" name="Proc. Natl. Acad. Sci. U.S.A.">
        <title>Interaction of two hereditary spastic paraplegia gene products, spastin and atlastin, suggests a common pathway for axonal maintenance.</title>
        <authorList>
            <person name="Evans K.J."/>
            <person name="Keller C."/>
            <person name="Pavur K."/>
            <person name="Glasgow K."/>
            <person name="Conn B."/>
            <person name="Lauring B.P."/>
        </authorList>
    </citation>
    <scope>CATALYTIC ACTIVITY</scope>
    <scope>INTERACTION WITH ATL1</scope>
    <scope>MUTAGENESIS OF GLU-442</scope>
</reference>
<reference key="18">
    <citation type="journal article" date="2007" name="J. Cell Biol.">
        <title>Recognition of C-terminal amino acids in tubulin by pore loops in Spastin is important for microtubule severing.</title>
        <authorList>
            <person name="White S.R."/>
            <person name="Evans K.J."/>
            <person name="Lary J."/>
            <person name="Cole J.L."/>
            <person name="Lauring B.P."/>
        </authorList>
    </citation>
    <scope>FUNCTION</scope>
    <scope>CATALYTIC ACTIVITY</scope>
    <scope>BIOPHYSICOCHEMICAL PROPERTIES</scope>
    <scope>HOMOHEXAMERIZATION</scope>
    <scope>INTERACTION WITH TUBULIN AND MICROTUBULES</scope>
    <scope>SUBCELLULAR LOCATION</scope>
    <scope>MUTAGENESIS OF TYR-415; GLU-442; ARG-451 AND ALA-457</scope>
    <scope>CHARACTERIZATION OF VARIANT SPG4 TYR-448</scope>
</reference>
<reference key="19">
    <citation type="journal article" date="2008" name="BMC Biol.">
        <title>A cryptic promoter in the first exon of the SPG4 gene directs the synthesis of the 60-kDa spastin isoform.</title>
        <authorList>
            <person name="Mancuso G."/>
            <person name="Rugarli E.I."/>
        </authorList>
    </citation>
    <scope>ALTERNATIVE PROMOTER USAGE</scope>
    <scope>CHARACTERIZATION OF VARIANT LEU-44</scope>
</reference>
<reference key="20">
    <citation type="journal article" date="2008" name="J. Neurochem.">
        <title>Spastin oligomerizes into a hexamer and the mutant spastin (E442Q) redistribute the wild-type spastin into filamentous microtubule.</title>
        <authorList>
            <person name="Pantakani D.V.K."/>
            <person name="Swapna L.S."/>
            <person name="Srinivasan N."/>
            <person name="Mannan A.U."/>
        </authorList>
    </citation>
    <scope>CATALYTIC ACTIVITY</scope>
    <scope>HOMOHEXAMERIZATION</scope>
    <scope>SUBCELLULAR LOCATION</scope>
    <scope>MUTAGENESIS OF GLU-442</scope>
</reference>
<reference key="21">
    <citation type="journal article" date="2008" name="Proc. Natl. Acad. Sci. U.S.A.">
        <title>A quantitative atlas of mitotic phosphorylation.</title>
        <authorList>
            <person name="Dephoure N."/>
            <person name="Zhou C."/>
            <person name="Villen J."/>
            <person name="Beausoleil S.A."/>
            <person name="Bakalarski C.E."/>
            <person name="Elledge S.J."/>
            <person name="Gygi S.P."/>
        </authorList>
    </citation>
    <scope>PHOSPHORYLATION [LARGE SCALE ANALYSIS] AT SER-268 AND THR-306</scope>
    <scope>IDENTIFICATION BY MASS SPECTROMETRY [LARGE SCALE ANALYSIS]</scope>
    <source>
        <tissue>Cervix carcinoma</tissue>
    </source>
</reference>
<reference key="22">
    <citation type="journal article" date="2009" name="Sci. Signal.">
        <title>Quantitative phosphoproteomic analysis of T cell receptor signaling reveals system-wide modulation of protein-protein interactions.</title>
        <authorList>
            <person name="Mayya V."/>
            <person name="Lundgren D.H."/>
            <person name="Hwang S.-I."/>
            <person name="Rezaul K."/>
            <person name="Wu L."/>
            <person name="Eng J.K."/>
            <person name="Rodionov V."/>
            <person name="Han D.K."/>
        </authorList>
    </citation>
    <scope>PHOSPHORYLATION [LARGE SCALE ANALYSIS] AT SER-268</scope>
    <scope>IDENTIFICATION BY MASS SPECTROMETRY [LARGE SCALE ANALYSIS]</scope>
    <source>
        <tissue>Leukemic T-cell</tissue>
    </source>
</reference>
<reference key="23">
    <citation type="journal article" date="2009" name="Traffic">
        <title>Spastin couples microtubule severing to membrane traffic in completion of cytokinesis and secretion.</title>
        <authorList>
            <person name="Connell J.W."/>
            <person name="Lindon C."/>
            <person name="Luzio J.P."/>
            <person name="Reid E."/>
        </authorList>
    </citation>
    <scope>FUNCTION</scope>
    <scope>SUBCELLULAR LOCATION (ISOFORMS 1 AND 3)</scope>
    <scope>CHARACTERIZATION OF VARIANT SPG4 ARG-388</scope>
</reference>
<reference key="24">
    <citation type="journal article" date="2010" name="J. Clin. Invest.">
        <title>Hereditary spastic paraplegia proteins REEP1, spastin, and atlastin-1 coordinate microtubule interactions with the tubular ER network.</title>
        <authorList>
            <person name="Park S.H."/>
            <person name="Zhu P.P."/>
            <person name="Parker R.L."/>
            <person name="Blackstone C."/>
        </authorList>
    </citation>
    <scope>INTERACTION WITH REEP1</scope>
    <scope>SUBCELLULAR LOCATION (ISOFORMS 1 AND 3)</scope>
    <scope>TOPOLOGY (ISOFORM 1)</scope>
</reference>
<reference key="25">
    <citation type="journal article" date="2010" name="J. Cell Biol.">
        <title>Tubulin polyglutamylation stimulates spastin-mediated microtubule severing.</title>
        <authorList>
            <person name="Lacroix B."/>
            <person name="van Dijk J."/>
            <person name="Gold N.D."/>
            <person name="Guizetti J."/>
            <person name="Aldrian-Herrada G."/>
            <person name="Rogowski K."/>
            <person name="Gerlich D.W."/>
            <person name="Janke C."/>
        </authorList>
    </citation>
    <scope>FUNCTION</scope>
</reference>
<reference key="26">
    <citation type="journal article" date="2010" name="Sci. Signal.">
        <title>Quantitative phosphoproteomics reveals widespread full phosphorylation site occupancy during mitosis.</title>
        <authorList>
            <person name="Olsen J.V."/>
            <person name="Vermeulen M."/>
            <person name="Santamaria A."/>
            <person name="Kumar C."/>
            <person name="Miller M.L."/>
            <person name="Jensen L.J."/>
            <person name="Gnad F."/>
            <person name="Cox J."/>
            <person name="Jensen T.S."/>
            <person name="Nigg E.A."/>
            <person name="Brunak S."/>
            <person name="Mann M."/>
        </authorList>
    </citation>
    <scope>PHOSPHORYLATION [LARGE SCALE ANALYSIS] AT SER-268</scope>
    <scope>IDENTIFICATION BY MASS SPECTROMETRY [LARGE SCALE ANALYSIS]</scope>
    <source>
        <tissue>Cervix carcinoma</tissue>
    </source>
</reference>
<reference key="27">
    <citation type="journal article" date="2011" name="Sci. Signal.">
        <title>System-wide temporal characterization of the proteome and phosphoproteome of human embryonic stem cell differentiation.</title>
        <authorList>
            <person name="Rigbolt K.T."/>
            <person name="Prokhorova T.A."/>
            <person name="Akimov V."/>
            <person name="Henningsen J."/>
            <person name="Johansen P.T."/>
            <person name="Kratchmarova I."/>
            <person name="Kassem M."/>
            <person name="Mann M."/>
            <person name="Olsen J.V."/>
            <person name="Blagoev B."/>
        </authorList>
    </citation>
    <scope>PHOSPHORYLATION [LARGE SCALE ANALYSIS] AT SER-245</scope>
    <scope>IDENTIFICATION BY MASS SPECTROMETRY [LARGE SCALE ANALYSIS]</scope>
</reference>
<reference key="28">
    <citation type="journal article" date="2011" name="Science">
        <title>Cortical constriction during abscission involves helices of ESCRT-III-dependent filaments.</title>
        <authorList>
            <person name="Guizetti J."/>
            <person name="Schermelleh L."/>
            <person name="Maentler J."/>
            <person name="Maar S."/>
            <person name="Poser I."/>
            <person name="Leonhardt H."/>
            <person name="Mueller-Reichert T."/>
            <person name="Gerlich D.W."/>
        </authorList>
    </citation>
    <scope>FUNCTION</scope>
    <scope>SUBCELLULAR LOCATION</scope>
</reference>
<reference key="29">
    <citation type="journal article" date="2012" name="J. Biol. Chem.">
        <title>Subunit Interactions and cooperativity in the microtubule-severing AAA ATPase spastin.</title>
        <authorList>
            <person name="Eckert T."/>
            <person name="Link S."/>
            <person name="Le D.T."/>
            <person name="Sobczak J.P."/>
            <person name="Gieseke A."/>
            <person name="Richter K."/>
            <person name="Woehlke G."/>
        </authorList>
    </citation>
    <scope>HOMOHEXAMERIZATION</scope>
    <scope>FUNCTION</scope>
    <scope>CATALYTIC ACTIVITY</scope>
    <scope>ACTIVITY REGULATION</scope>
    <scope>KINETIC PARAMETERS</scope>
    <scope>BIOPHYSICOCHEMICAL PROPERTIES</scope>
    <scope>SUBUNIT</scope>
    <scope>COOPERATIVITY</scope>
    <scope>MUTAGENESIS OF GLU-442</scope>
</reference>
<reference key="30">
    <citation type="journal article" date="2012" name="J. Clin. Invest.">
        <title>Mutations in the ER-shaping protein reticulon 2 cause the axon-degenerative disorder hereditary spastic paraplegia type 12.</title>
        <authorList>
            <person name="Montenegro G."/>
            <person name="Rebelo A.P."/>
            <person name="Connell J."/>
            <person name="Allison R."/>
            <person name="Babalini C."/>
            <person name="D'Aloia M."/>
            <person name="Montieri P."/>
            <person name="Schule R."/>
            <person name="Ishiura H."/>
            <person name="Price J."/>
            <person name="Strickland A."/>
            <person name="Gonzalez M.A."/>
            <person name="Baumbach-Reardon L."/>
            <person name="Deconinck T."/>
            <person name="Huang J."/>
            <person name="Bernardi G."/>
            <person name="Vance J.M."/>
            <person name="Rogers M.T."/>
            <person name="Tsuji S."/>
            <person name="De Jonghe P."/>
            <person name="Pericak-Vance M.A."/>
            <person name="Schols L."/>
            <person name="Orlacchio A."/>
            <person name="Reid E."/>
            <person name="Zuchner S."/>
        </authorList>
    </citation>
    <scope>INTERACTION WITH RTN2</scope>
</reference>
<reference key="31">
    <citation type="journal article" date="2012" name="PLoS ONE">
        <title>Spastin's microtubule-binding properties and comparison to katanin.</title>
        <authorList>
            <person name="Eckert T."/>
            <person name="Le D.T."/>
            <person name="Link S."/>
            <person name="Friedmann L."/>
            <person name="Woehlke G."/>
        </authorList>
    </citation>
    <scope>INTERACTION WITH MICROTUBULES</scope>
    <scope>OLIGOMERIZATION</scope>
    <scope>MUTAGENESIS OF 310-LYS--LYS-312 AND GLU-442</scope>
</reference>
<reference key="32">
    <citation type="journal article" date="2013" name="FEBS J.">
        <title>The nucleotide cycle of spastin correlates with its microtubule-binding properties.</title>
        <authorList>
            <person name="Wen M."/>
            <person name="Wang C."/>
        </authorList>
    </citation>
    <scope>ACTIVITY REGULATION</scope>
    <scope>MUTAGENESIS OF GLU-442 AND CYS-448</scope>
</reference>
<reference key="33">
    <citation type="journal article" date="2013" name="J. Cell Biol.">
        <title>An ESCRT-spastin interaction promotes fission of recycling tubules from the endosome.</title>
        <authorList>
            <person name="Allison R."/>
            <person name="Lumb J.H."/>
            <person name="Fassier C."/>
            <person name="Connell J.W."/>
            <person name="Ten Martin D."/>
            <person name="Seaman M.N."/>
            <person name="Hazan J."/>
            <person name="Reid E."/>
        </authorList>
    </citation>
    <scope>FUNCTION</scope>
    <scope>SUBCELLULAR LOCATION (ISOFORMS 1 AND 3)</scope>
    <scope>INTERACTION WITH IST1</scope>
</reference>
<reference key="34">
    <citation type="journal article" date="2013" name="J. Proteome Res.">
        <title>Toward a comprehensive characterization of a human cancer cell phosphoproteome.</title>
        <authorList>
            <person name="Zhou H."/>
            <person name="Di Palma S."/>
            <person name="Preisinger C."/>
            <person name="Peng M."/>
            <person name="Polat A.N."/>
            <person name="Heck A.J."/>
            <person name="Mohammed S."/>
        </authorList>
    </citation>
    <scope>PHOSPHORYLATION [LARGE SCALE ANALYSIS] AT SER-245; SER-268 AND SER-597</scope>
    <scope>IDENTIFICATION BY MASS SPECTROMETRY [LARGE SCALE ANALYSIS]</scope>
    <source>
        <tissue>Cervix carcinoma</tissue>
        <tissue>Erythroleukemia</tissue>
    </source>
</reference>
<reference key="35">
    <citation type="journal article" date="2013" name="Proc. Natl. Acad. Sci. U.S.A.">
        <title>Protrudin binds atlastins and endoplasmic reticulum-shaping proteins and regulates network formation.</title>
        <authorList>
            <person name="Chang J."/>
            <person name="Lee S."/>
            <person name="Blackstone C."/>
        </authorList>
    </citation>
    <scope>SUBCELLULAR LOCATION</scope>
    <scope>INTERACTION WITH ZFYVE27</scope>
</reference>
<reference key="36">
    <citation type="journal article" date="2014" name="J. Proteomics">
        <title>An enzyme assisted RP-RPLC approach for in-depth analysis of human liver phosphoproteome.</title>
        <authorList>
            <person name="Bian Y."/>
            <person name="Song C."/>
            <person name="Cheng K."/>
            <person name="Dong M."/>
            <person name="Wang F."/>
            <person name="Huang J."/>
            <person name="Sun D."/>
            <person name="Wang L."/>
            <person name="Ye M."/>
            <person name="Zou H."/>
        </authorList>
    </citation>
    <scope>IDENTIFICATION BY MASS SPECTROMETRY [LARGE SCALE ANALYSIS]</scope>
    <source>
        <tissue>Liver</tissue>
    </source>
</reference>
<reference key="37">
    <citation type="journal article" date="2014" name="PLoS ONE">
        <title>Spastin-interacting protein NA14/SSNA1 functions in cytokinesis and axon development.</title>
        <authorList>
            <person name="Goyal U."/>
            <person name="Renvoise B."/>
            <person name="Chang J."/>
            <person name="Blackstone C."/>
        </authorList>
    </citation>
    <scope>INTERACTION WITH SSNA1</scope>
    <scope>SUBCELLULAR LOCATION</scope>
</reference>
<reference key="38">
    <citation type="journal article" date="2015" name="Nature">
        <title>Spastin and ESCRT-III coordinate mitotic spindle disassembly and nuclear envelope sealing.</title>
        <authorList>
            <person name="Vietri M."/>
            <person name="Schink K.O."/>
            <person name="Campsteijn C."/>
            <person name="Wegner C.S."/>
            <person name="Schultz S.W."/>
            <person name="Christ L."/>
            <person name="Thoresen S.B."/>
            <person name="Brech A."/>
            <person name="Raiborg C."/>
            <person name="Stenmark H."/>
        </authorList>
    </citation>
    <scope>FUNCTION</scope>
    <scope>SUBCELLULAR LOCATION (ISOFORMS 1 AND 3)</scope>
    <scope>INTERACTION WITH IST1</scope>
</reference>
<reference key="39">
    <citation type="journal article" date="2015" name="PLoS Genet.">
        <title>Spastin binds to lipid droplets and affects lipid metabolism.</title>
        <authorList>
            <person name="Papadopoulos C."/>
            <person name="Orso G."/>
            <person name="Mancuso G."/>
            <person name="Herholz M."/>
            <person name="Gumeni S."/>
            <person name="Tadepalle N."/>
            <person name="Juengst C."/>
            <person name="Tzschichholz A."/>
            <person name="Schauss A."/>
            <person name="Hoening S."/>
            <person name="Trifunovic A."/>
            <person name="Daga A."/>
            <person name="Rugarli E.I."/>
        </authorList>
    </citation>
    <scope>FUNCTION (ISOFORM 1)</scope>
    <scope>SUBCELLULAR LOCATION (ISOFORM 1)</scope>
    <scope>MUTAGENESIS OF ARG-65 AND 81-ARG--ARG-84</scope>
</reference>
<reference key="40">
    <citation type="journal article" date="2016" name="Cell">
        <title>Graded control of microtubule severing by tubulin glutamylation.</title>
        <authorList>
            <person name="Valenstein M.L."/>
            <person name="Roll-Mecak A."/>
        </authorList>
    </citation>
    <scope>FUNCTION</scope>
</reference>
<reference key="41">
    <citation type="journal article" date="2023" name="Life. Sci Alliance">
        <title>N-terminal proteoforms may engage in different protein complexes.</title>
        <authorList>
            <person name="Bogaert A."/>
            <person name="Fijalkowska D."/>
            <person name="Staes A."/>
            <person name="Van de Steene T."/>
            <person name="Vuylsteke M."/>
            <person name="Stadler C."/>
            <person name="Eyckerman S."/>
            <person name="Spirohn K."/>
            <person name="Hao T."/>
            <person name="Calderwood M.A."/>
            <person name="Gevaert K."/>
        </authorList>
    </citation>
    <scope>IDENTIFICATION BY MASS SPECTROMETRY</scope>
</reference>
<reference key="42">
    <citation type="journal article" date="2008" name="Nat. Struct. Mol. Biol.">
        <title>Structural basis for midbody targeting of spastin by the ESCRT-III protein CHMP1B.</title>
        <authorList>
            <person name="Yang D."/>
            <person name="Rismanchi N."/>
            <person name="Renvoise B."/>
            <person name="Lippincott-Schwartz J."/>
            <person name="Blackstone C."/>
            <person name="Hurley J.H."/>
        </authorList>
    </citation>
    <scope>X-RAY CRYSTALLOGRAPHY (2.5 ANGSTROMS) OF 112-196 IN COMPLEX WITH CHMP1B</scope>
    <scope>INTERACTION WITH CHMP1B</scope>
    <scope>SUBCELLULAR LOCATION</scope>
    <scope>MUTAGENESIS OF HIS-120 AND PHE-124</scope>
</reference>
<reference key="43">
    <citation type="journal article" date="2012" name="J. Struct. Biol.">
        <title>Crystal structure of the human spastin AAA domain.</title>
        <authorList>
            <person name="Taylor J.L."/>
            <person name="White S.R."/>
            <person name="Lauring B."/>
            <person name="Kull F.J."/>
        </authorList>
    </citation>
    <scope>X-RAY CRYSTALLOGRAPHY (3.30 ANGSTROMS) OF 228-616 OF MUTANT GLN-442</scope>
    <scope>MUTAGENESIS OF GLU-442</scope>
</reference>
<reference key="44">
    <citation type="journal article" date="2000" name="Eur. J. Hum. Genet.">
        <title>Hereditary spastic paraplegia caused by mutations in the SPG4 gene.</title>
        <authorList>
            <person name="Buerger J."/>
            <person name="Fonknechten N."/>
            <person name="Hoeltzenbein M."/>
            <person name="Neumann L."/>
            <person name="Bratanoff E."/>
            <person name="Hazan J."/>
            <person name="Reis A."/>
        </authorList>
    </citation>
    <scope>VARIANT SPG4 GLY-441</scope>
</reference>
<reference key="45">
    <citation type="journal article" date="2000" name="Hum. Mol. Genet.">
        <title>Spectrum of SPG4 mutations in autosomal dominant spastic paraplegia.</title>
        <authorList>
            <person name="Fonknechten N."/>
            <person name="Mavel D."/>
            <person name="Byrne P."/>
            <person name="Davoine C.-S."/>
            <person name="Cruaud C."/>
            <person name="Bonsch D."/>
            <person name="Samson D."/>
            <person name="Coutinho P."/>
            <person name="Hutchinson M."/>
            <person name="McMonagle P."/>
            <person name="Burgunder J.-M."/>
            <person name="Tartaglione A."/>
            <person name="Heinzlef O."/>
            <person name="Feki I."/>
            <person name="Deufel T."/>
            <person name="Parfrey N."/>
            <person name="Brice A."/>
            <person name="Fontaine B."/>
            <person name="Prud'homme J.-F."/>
            <person name="Weissenbach J."/>
            <person name="Duerr A."/>
            <person name="Hazan J."/>
        </authorList>
    </citation>
    <scope>VARIANTS SPG4 CYS-362; ARG-370; CYS-381; LYS-386; ARG-388; VAL-426; TYR-448; LEU-460; CYS-499; ASN-555 AND VAL-556</scope>
</reference>
<reference key="46">
    <citation type="journal article" date="2000" name="J. Med. Genet.">
        <title>Mutation analysis of the spastin gene (SPG4) in patients with hereditary spastic paraparesis.</title>
        <authorList>
            <person name="Lindsey J.C."/>
            <person name="Lusher M.E."/>
            <person name="McDermott C.J."/>
            <person name="White K.D."/>
            <person name="Reid E."/>
            <person name="Rubinsztein D.C."/>
            <person name="Bashir R."/>
            <person name="Hazan J."/>
            <person name="Shaw P.J."/>
            <person name="Bushby K.M.D."/>
        </authorList>
    </citation>
    <scope>VARIANTS SPG4 GLY-424 AND HIS-584</scope>
    <scope>VARIANT LEU-44</scope>
</reference>
<reference key="47">
    <citation type="journal article" date="2000" name="Neurology">
        <title>Novel mutations in spastin gene and absence of correlation with age at onset of symptoms.</title>
        <authorList>
            <person name="Hentati A."/>
            <person name="Deng H.-X."/>
            <person name="Zhai H."/>
            <person name="Chen W."/>
            <person name="Yang Y."/>
            <person name="Hung W.-Y."/>
            <person name="Azim A.C."/>
            <person name="Bohlega S."/>
            <person name="Tandan R."/>
            <person name="Warner C."/>
            <person name="Laing N.G."/>
            <person name="Cambi F."/>
            <person name="Mitsumoto H."/>
            <person name="Roos R.P."/>
            <person name="Boustany R.-M.N."/>
            <person name="Ben-Hamida M."/>
            <person name="Hentati F."/>
            <person name="Siddique T."/>
        </authorList>
    </citation>
    <scope>VARIANTS SPG4 PHE-436 AND ASP-559</scope>
</reference>
<reference key="48">
    <citation type="journal article" date="2001" name="Am. J. Hum. Genet.">
        <title>Identification and expression analysis of spastin gene mutations in hereditary spastic paraplegia.</title>
        <authorList>
            <person name="Svenson I.K."/>
            <person name="Ashley-Koch A.E."/>
            <person name="Gaskell P.C."/>
            <person name="Riney T.J."/>
            <person name="Cumming W.J.K."/>
            <person name="Kingston H.M."/>
            <person name="Hogan E.L."/>
            <person name="Boustany R.-M.N."/>
            <person name="Vance J.M."/>
            <person name="Nance M.A."/>
            <person name="Pericak-Vance M.A."/>
            <person name="Marchuk D.A."/>
        </authorList>
    </citation>
    <scope>VARIANTS SPG4 CYS-499 AND GLY-562</scope>
</reference>
<reference key="49">
    <citation type="journal article" date="2002" name="Acta Neurol. Scand.">
        <title>A Japanese SPG4 family with a novel missense mutation of the SPG4 gene: intrafamilial variability in age at onset and clinical severity.</title>
        <authorList>
            <person name="Namekawa M."/>
            <person name="Takiyama Y."/>
            <person name="Sakoe K."/>
            <person name="Nagaki H."/>
            <person name="Shimazaki H."/>
            <person name="Yoshimura M."/>
            <person name="Ikeguchi K."/>
            <person name="Nakano I."/>
            <person name="Nishizawa M."/>
        </authorList>
    </citation>
    <scope>VARIANT SPG4 VAL-485</scope>
</reference>
<reference key="50">
    <citation type="journal article" date="2002" name="Arch. Neurol.">
        <title>Spectrum of SPG4 mutations in a large collection of North American families with hereditary spastic paraplegia.</title>
        <authorList>
            <person name="Meijer I.A."/>
            <person name="Hand C.K."/>
            <person name="Cossette P."/>
            <person name="Figlewicz D.A."/>
            <person name="Rouleau G.A."/>
        </authorList>
    </citation>
    <scope>VARIANTS SPG4 LEU-399; VAL-426; LEU-489; ASP-559 AND GLN-562</scope>
</reference>
<reference key="51">
    <citation type="journal article" date="2002" name="Hum. Mutat.">
        <title>Mutation analysis of the spastin gene (SPG4) in patients in Germany with autosomal dominant hereditary spastic paraplegia.</title>
        <authorList>
            <person name="Sauter S.M."/>
            <person name="Miterski B."/>
            <person name="Klimpe S."/>
            <person name="Boensch D."/>
            <person name="Schoels L."/>
            <person name="Visbeck A."/>
            <person name="Papke T."/>
            <person name="Hopf H.C."/>
            <person name="Engel W."/>
            <person name="Deufel T."/>
            <person name="Epplen J.T."/>
            <person name="Neesen J."/>
        </authorList>
    </citation>
    <scope>VARIANTS SPG4 ARG-407; TYR-551 AND ILE-615</scope>
</reference>
<reference key="52">
    <citation type="journal article" date="2002" name="J. Med. Genet.">
        <title>Spastin gene mutation in Japanese with hereditary spastic paraplegia.</title>
        <authorList>
            <person name="Yabe I."/>
            <person name="Sasaki H."/>
            <person name="Tashiro K."/>
            <person name="Matsuura T."/>
            <person name="Takegami T."/>
            <person name="Satoh T."/>
        </authorList>
    </citation>
    <scope>VARIANTS SPG4 LYS-347; ARG-388 AND CYS-499</scope>
</reference>
<reference key="53">
    <citation type="journal article" date="2002" name="J. Neurol.">
        <title>Missense and splice site mutations in SPG4 suggest loss-of-function in dominant spastic paraplegia.</title>
        <authorList>
            <person name="Patrono C."/>
            <person name="Casali C."/>
            <person name="Tessa A."/>
            <person name="Cricchi F."/>
            <person name="Fortini D."/>
            <person name="Carrozzo R."/>
            <person name="Siciliano G."/>
            <person name="Bertini E."/>
            <person name="Santorelli F.M."/>
        </authorList>
    </citation>
    <scope>VARIANT SPG4 ASP-512</scope>
</reference>
<reference key="54">
    <citation type="journal article" date="2002" name="J. Neurol. Sci.">
        <title>Three novel spastin (SPG4) mutations in families with autosomal dominant hereditary spastic paraplegia.</title>
        <authorList>
            <person name="Proukakis C."/>
            <person name="Hart P.E."/>
            <person name="Cornish A."/>
            <person name="Warner T.T."/>
            <person name="Crosby A.H."/>
        </authorList>
    </citation>
    <scope>VARIANT SPG4 PHE-404 DEL</scope>
</reference>
<reference key="55">
    <citation type="journal article" date="2002" name="J. Hum. Genet.">
        <title>A novel missense mutation (I344K) in the SPG4gene in a Korean family with autosomal-dominant hereditary spastic paraplegia.</title>
        <authorList>
            <person name="Ki C.S."/>
            <person name="Lee W.Y."/>
            <person name="Han do H."/>
            <person name="Sung D.H."/>
            <person name="Lee K.B."/>
            <person name="Lee K.A."/>
            <person name="Cho S.S."/>
            <person name="Cho S."/>
            <person name="Hwang H."/>
            <person name="Sohn K.M."/>
            <person name="Choi Y.J."/>
            <person name="Kim J.W."/>
        </authorList>
    </citation>
    <scope>VARIANT SPG4 LYS-344</scope>
</reference>
<reference key="56">
    <citation type="journal article" date="2003" name="Hum. Mutat.">
        <title>Screening of patients with hereditary spastic paraplegia reveals seven novel mutations in the SPG4 (Spastin) gene.</title>
        <authorList>
            <person name="Proukakis C."/>
            <person name="Auer-Grumbach M."/>
            <person name="Wagner K."/>
            <person name="Wilkinson P.A."/>
            <person name="Reid E."/>
            <person name="Patton M.A."/>
            <person name="Warner T.T."/>
            <person name="Crosby A.H."/>
        </authorList>
    </citation>
    <scope>VARIANT SPG4 LEU-503</scope>
</reference>
<reference key="57">
    <citation type="journal article" date="2003" name="Eur. J. Hum. Genet.">
        <title>Novel spastin mutations and their expression analysis in two Italian families.</title>
        <authorList>
            <person name="Molon A."/>
            <person name="Montagna P."/>
            <person name="Angelini C."/>
            <person name="Pegoraro E."/>
        </authorList>
    </citation>
    <scope>VARIANT SPG4 PRO-534</scope>
</reference>
<reference key="58">
    <citation type="journal article" date="2004" name="Arch. Neurol.">
        <title>Three novel mutations of the spastin gene in Chinese patients with hereditary spastic paraplegia.</title>
        <authorList>
            <person name="Tang B."/>
            <person name="Zhao G."/>
            <person name="Xia K."/>
            <person name="Pan Q."/>
            <person name="Luo W."/>
            <person name="Shen L."/>
            <person name="Long Z."/>
            <person name="Dai H."/>
            <person name="Zi X."/>
            <person name="Jiang H."/>
        </authorList>
    </citation>
    <scope>VARIANTS SPG4 GLN-378; VAL-390 AND LEU-515 DEL</scope>
</reference>
<reference key="59">
    <citation type="journal article" date="2004" name="Arch. Neurol.">
        <title>Hereditary spastic paraplegia: clinical genetic study of 15 families.</title>
        <authorList>
            <person name="Orlacchio A."/>
            <person name="Kawarai T."/>
            <person name="Totaro A."/>
            <person name="Errico A."/>
            <person name="St George-Hyslop P.H."/>
            <person name="Rugarli E.I."/>
            <person name="Bernardi G."/>
        </authorList>
    </citation>
    <scope>VARIANT SPG4 SER-386</scope>
</reference>
<reference key="60">
    <citation type="journal article" date="2004" name="Eur. J. Neurol.">
        <title>Hereditary spastic paraplegia with cerebellar ataxia: a complex phenotype associated with a new SPG4 gene mutation.</title>
        <authorList>
            <person name="Nielsen J.E."/>
            <person name="Johnsen B."/>
            <person name="Koefoed P."/>
            <person name="Scheuer K.H."/>
            <person name="Groenbech-Jensen M."/>
            <person name="Law I."/>
            <person name="Krabbe K."/>
            <person name="Noerremoelle A."/>
            <person name="Eiberg H."/>
            <person name="Soendergaard H."/>
            <person name="Dam M."/>
            <person name="Rehfeld J.F."/>
            <person name="Krarup C."/>
            <person name="Paulson O.B."/>
            <person name="Hasholt L."/>
            <person name="Soerensen S.A."/>
        </authorList>
    </citation>
    <scope>VARIANT SPG4 GLN-490 DEL</scope>
</reference>
<reference key="61">
    <citation type="journal article" date="2004" name="Neurogenetics">
        <title>Intragenic modifiers of hereditary spastic paraplegia due to spastin gene mutations.</title>
        <authorList>
            <person name="Svenson I.K."/>
            <person name="Kloos M.T."/>
            <person name="Gaskell P.C."/>
            <person name="Nance M.A."/>
            <person name="Garbern J.Y."/>
            <person name="Hisanaga S."/>
            <person name="Pericak-Vance M.A."/>
            <person name="Ashley-Koch A.E."/>
            <person name="Marchuk D.A."/>
        </authorList>
    </citation>
    <scope>VARIANTS SPG4 VAL-470 AND GLY-562</scope>
    <scope>VARIANTS LEU-44 AND GLN-45</scope>
</reference>
<reference key="62">
    <citation type="journal article" date="2004" name="Neuromuscul. Disord.">
        <title>Two novel mutations in the spastin gene (SPG4) found by DHPLC mutation analysis.</title>
        <authorList>
            <person name="Falco M."/>
            <person name="Scuderi C."/>
            <person name="Musumeci S."/>
            <person name="Sturnio M."/>
            <person name="Neri M."/>
            <person name="Bigoni S."/>
            <person name="Caniatti L."/>
            <person name="Fichera M."/>
        </authorList>
    </citation>
    <scope>VARIANTS SPG4 GLY-459 AND CYS-460</scope>
</reference>
<reference key="63">
    <citation type="journal article" date="2004" name="Neurology">
        <title>A new SPG4 mutation in a variant form of spastic paraplegia with congenital arachnoid cysts.</title>
        <authorList>
            <person name="Orlacchio A."/>
            <person name="Gaudiello F."/>
            <person name="Totaro A."/>
            <person name="Floris R."/>
            <person name="St George-Hyslop P.H."/>
            <person name="Bernardi G."/>
            <person name="Kawarai T."/>
        </authorList>
    </citation>
    <scope>VARIANT SPG4 ILE-614</scope>
</reference>
<reference key="64">
    <citation type="journal article" date="2004" name="Neurology">
        <title>Infantile hereditary spastic paraparesis due to codominant mutations in the spastin gene.</title>
        <authorList>
            <person name="Chinnery P.F."/>
            <person name="Keers S.M."/>
            <person name="Holden M.J."/>
            <person name="Ramesh V."/>
            <person name="Dalton A."/>
        </authorList>
    </citation>
    <scope>VARIANT SPG4 LEU-361</scope>
    <scope>VARIANT LEU-44</scope>
</reference>
<reference key="65">
    <citation type="journal article" date="2006" name="Arch. Neurol.">
        <title>Eight novel mutations in SPG4 in a large sample of patients with hereditary spastic paraplegia.</title>
        <authorList>
            <person name="Crippa F."/>
            <person name="Panzeri C."/>
            <person name="Martinuzzi A."/>
            <person name="Arnoldi A."/>
            <person name="Redaelli F."/>
            <person name="Tonelli A."/>
            <person name="Baschirotto C."/>
            <person name="Vazza G."/>
            <person name="Mostacciuolo M.L."/>
            <person name="Daga A."/>
            <person name="Orso G."/>
            <person name="Profice P."/>
            <person name="Trabacca A."/>
            <person name="D'Angelo M.G."/>
            <person name="Comi G.P."/>
            <person name="Galbiati S."/>
            <person name="Lamperti C."/>
            <person name="Bonato S."/>
            <person name="Pandolfo M."/>
            <person name="Meola G."/>
            <person name="Musumeci O."/>
            <person name="Toscano A."/>
            <person name="Trevisan C.P."/>
            <person name="Bresolin N."/>
            <person name="Bassi M.T."/>
        </authorList>
    </citation>
    <scope>VARIANTS SPG4 VAL-195; VAL-406; GLY-493; HIS-499; TRP-503 AND CYS-607</scope>
</reference>
<reference key="66">
    <citation type="journal article" date="2006" name="Neuromuscul. Disord.">
        <title>Novel spastin (SPG4) mutations in Italian patients with hereditary spastic paraplegia.</title>
        <authorList>
            <person name="Magariello A."/>
            <person name="Muglia M."/>
            <person name="Patitucci A."/>
            <person name="Mazzei R."/>
            <person name="Conforti F.L."/>
            <person name="Gabriele A.L."/>
            <person name="Sprovieri T."/>
            <person name="Ungaro C."/>
            <person name="Gambardella A."/>
            <person name="Mancuso M."/>
            <person name="Siciliano G."/>
            <person name="Branca D."/>
            <person name="Aguglia U."/>
            <person name="de Angelis M.V."/>
            <person name="Longo K."/>
            <person name="Quattrone A."/>
        </authorList>
    </citation>
    <scope>VARIANT SPG4 LEU-435</scope>
</reference>
<reference key="67">
    <citation type="journal article" date="2006" name="Science">
        <title>The consensus coding sequences of human breast and colorectal cancers.</title>
        <authorList>
            <person name="Sjoeblom T."/>
            <person name="Jones S."/>
            <person name="Wood L.D."/>
            <person name="Parsons D.W."/>
            <person name="Lin J."/>
            <person name="Barber T.D."/>
            <person name="Mandelker D."/>
            <person name="Leary R.J."/>
            <person name="Ptak J."/>
            <person name="Silliman N."/>
            <person name="Szabo S."/>
            <person name="Buckhaults P."/>
            <person name="Farrell C."/>
            <person name="Meeh P."/>
            <person name="Markowitz S.D."/>
            <person name="Willis J."/>
            <person name="Dawson D."/>
            <person name="Willson J.K.V."/>
            <person name="Gazdar A.F."/>
            <person name="Hartigan J."/>
            <person name="Wu L."/>
            <person name="Liu C."/>
            <person name="Parmigiani G."/>
            <person name="Park B.H."/>
            <person name="Bachman K.E."/>
            <person name="Papadopoulos N."/>
            <person name="Vogelstein B."/>
            <person name="Kinzler K.W."/>
            <person name="Velculescu V.E."/>
        </authorList>
    </citation>
    <scope>VARIANT [LARGE SCALE ANALYSIS] LEU-423</scope>
</reference>
<reference key="68">
    <citation type="journal article" date="2007" name="Eur. J. Neurol.">
        <title>Seven novel mutations and four exon deletions in a collection of Norwegian patients with SPG4 hereditary spastic paraplegia.</title>
        <authorList>
            <person name="Erichsen A.K."/>
            <person name="Inderhaug E."/>
            <person name="Mattingsdal M."/>
            <person name="Eiklid K."/>
            <person name="Tallaksen C.M."/>
        </authorList>
    </citation>
    <scope>VARIANTS SPG4 THR-364; HIS-380 AND HIS-579</scope>
    <scope>VARIANT LEU-44</scope>
</reference>
<reference key="69">
    <citation type="journal article" date="2010" name="BMC Neurol.">
        <title>Unique spectrum of SPAST variants in Estonian HSP patients: presence of benign missense changes but lack of exonic rearrangements.</title>
        <authorList>
            <person name="Braschinsky M."/>
            <person name="Tamm R."/>
            <person name="Beetz C."/>
            <person name="Sachez-Ferrero E."/>
            <person name="Raukas E."/>
            <person name="Luus S.M."/>
            <person name="Gross-Paju K."/>
            <person name="Boillot C."/>
            <person name="Canzian F."/>
            <person name="Metspalu A."/>
            <person name="Haldre S."/>
        </authorList>
    </citation>
    <scope>VARIANTS LEU-44 AND GLY-229</scope>
    <scope>VARIANTS SPG4 ILE-162; PHE-426 AND SER-460</scope>
</reference>
<reference key="70">
    <citation type="journal article" date="2010" name="BMC Neurol.">
        <title>Mutational spectrum of the SPG4 (SPAST) and SPG3A (ATL1) genes in Spanish patients with hereditary spastic paraplegia.</title>
        <authorList>
            <person name="Alvarez V."/>
            <person name="Sanchez-Ferrero E."/>
            <person name="Beetz C."/>
            <person name="Diaz M."/>
            <person name="Alonso B."/>
            <person name="Corao A.I."/>
            <person name="Gamez J."/>
            <person name="Esteban J."/>
            <person name="Gonzalo J.F."/>
            <person name="Pascual-Pascual S.I."/>
            <person name="Lopez de Munain A."/>
            <person name="Moris G."/>
            <person name="Ribacoba R."/>
            <person name="Marquez C."/>
            <person name="Rosell J."/>
            <person name="Marin R."/>
            <person name="Garcia-Barcina M.J."/>
            <person name="Del Castillo E."/>
            <person name="Benito C."/>
            <person name="Coto E."/>
        </authorList>
    </citation>
    <scope>VARIANTS SPG4 THR-287 DEL; LEU-293; LEU-328; ARG-378; HIS-380; PRO-391; 393-LYS--ALA-396 DEL; THR-409; ARG-410; PRO-436; ASN-441; SER-460; ALA-463; PHE-492; GLY-498; ARG-503 INS; GLY-514 AND THR-580</scope>
</reference>
<reference key="71">
    <citation type="journal article" date="2010" name="J. Neurol. Neurosurg. Psych.">
        <title>Hereditary spastic paraplegia due to SPAST mutations in 151 Dutch patients: new clinical aspects and 27 novel mutations.</title>
        <authorList>
            <person name="de Bot S.T."/>
            <person name="van den Elzen R.T."/>
            <person name="Mensenkamp A.R."/>
            <person name="Schelhaas H.J."/>
            <person name="Willemsen M.A."/>
            <person name="Knoers N.V."/>
            <person name="Kremer H.P."/>
            <person name="van de Warrenburg B.P."/>
            <person name="Scheffer H."/>
        </authorList>
    </citation>
    <scope>VARIANTS SPG4 ILE-162; LYS-356; SER-365; ARG-382; ILE-407; PHE-422; ASN-445; SER-460; LEU-482; GLU-512 DEL; VAL-534 AND PRO-562</scope>
    <scope>VARIANT LEU-44</scope>
</reference>
<reference key="72">
    <citation type="journal article" date="2011" name="Clin. Genet.">
        <title>Mutation screening of spastin, atlastin, and REEP1 in hereditary spastic paraplegia.</title>
        <authorList>
            <person name="McCorquodale D.S. III"/>
            <person name="Ozomaro U."/>
            <person name="Huang J."/>
            <person name="Montenegro G."/>
            <person name="Kushman A."/>
            <person name="Citrigno L."/>
            <person name="Price J."/>
            <person name="Speziani F."/>
            <person name="Pericak-Vance M.A."/>
            <person name="Zuchner S."/>
        </authorList>
    </citation>
    <scope>VARIANTS SPG4 THR-97; ASP-201; SER-314; VAL-360; ALA-464; GLY-498 AND ILE-550</scope>
</reference>
<reference key="73">
    <citation type="journal article" date="2011" name="Eur. J. Neurol.">
        <title>Clinical and genetic findings in a series of Italian children with pure hereditary spastic paraplegia.</title>
        <authorList>
            <person name="Battini R."/>
            <person name="Fogli A."/>
            <person name="Borghetti D."/>
            <person name="Michelucci A."/>
            <person name="Perazza S."/>
            <person name="Baldinotti F."/>
            <person name="Conidi M.E."/>
            <person name="Ferreri M.I."/>
            <person name="Simi P."/>
            <person name="Cioni G."/>
        </authorList>
    </citation>
    <scope>VARIANTS SPG4 LEU-413 AND LYS-454</scope>
</reference>
<reference key="74">
    <citation type="journal article" date="2011" name="J. Neurol. Sci.">
        <title>Detection of novel mutations and review of published data suggests that hereditary spastic paraplegia caused by spastin (SPAST) mutations is found more often in males.</title>
        <authorList>
            <person name="Proukakis C."/>
            <person name="Moore D."/>
            <person name="Labrum R."/>
            <person name="Wood N.W."/>
            <person name="Houlden H."/>
        </authorList>
    </citation>
    <scope>VARIANTS SPG4 MET-364; LEU-368; GLU-377 AND SER-450</scope>
</reference>
<reference key="75">
    <citation type="journal article" date="2012" name="Neurosci. Lett.">
        <title>Novel and recurrent spastin mutations in a large series of SPG4 Italian families.</title>
        <authorList>
            <person name="Nanetti L."/>
            <person name="Baratta S."/>
            <person name="Panzeri M."/>
            <person name="Tomasello C."/>
            <person name="Lovati C."/>
            <person name="Azzollini J."/>
            <person name="Gellera C."/>
            <person name="Di Bella D."/>
            <person name="Taroni F."/>
            <person name="Mariotti C."/>
        </authorList>
    </citation>
    <scope>VARIANTS SPG4 THR-95; 112-GLU--VAL-616 DEL; 135-GLU--VAL-616 DEL; LEU-399; ARG-406; THR-409; VAL-426; 431-ARG--VAL-616 DEL; CYS-460; TRP-503; ARG-559 AND 562-ARG--VAL-616 DEL</scope>
</reference>
<reference key="76">
    <citation type="journal article" date="2013" name="Eur. J. Neurol.">
        <title>First mutation in the nuclear localization signal sequence of spastin protein identified in a patient with hereditary spastic paraplegia.</title>
        <authorList>
            <person name="Magariello A."/>
            <person name="Tortorella C."/>
            <person name="Patitucci A."/>
            <person name="Tortelli R."/>
            <person name="Liguori M."/>
            <person name="Mazzei R."/>
            <person name="Conforti F.L."/>
            <person name="Citrigno L."/>
            <person name="Ungaro C."/>
            <person name="Simone I.L."/>
            <person name="Muglia M."/>
        </authorList>
    </citation>
    <scope>VARIANT SPG4 HIS-309</scope>
</reference>
<reference key="77">
    <citation type="journal article" date="2014" name="BMC Neurol.">
        <title>High frequency of SPG4 in Taiwanese families with autosomal dominant hereditary spastic paraplegia.</title>
        <authorList>
            <person name="Lan M.Y."/>
            <person name="Chang Y.Y."/>
            <person name="Yeh T.H."/>
            <person name="Lai S.C."/>
            <person name="Liou C.W."/>
            <person name="Kuo H.C."/>
            <person name="Wu Y.R."/>
            <person name="Lyu R.K."/>
            <person name="Hung J.W."/>
            <person name="Chang Y.C."/>
            <person name="Lu C.S."/>
        </authorList>
    </citation>
    <scope>VARIANTS SPG4 244-ASN--VAL-616 DEL; PRO-461; GLY-555 AND 581-ARG--VAL-616 DEL</scope>
</reference>
<reference key="78">
    <citation type="journal article" date="2014" name="J. Clin. Neurol.">
        <title>Mutation analysis of SPAST, ATL1, and REEP1 in Korean Patients with Hereditary Spastic Paraplegia.</title>
        <authorList>
            <person name="Kim T.H."/>
            <person name="Lee J.H."/>
            <person name="Park Y.E."/>
            <person name="Shin J.H."/>
            <person name="Nam T.S."/>
            <person name="Kim H.S."/>
            <person name="Jang H.J."/>
            <person name="Semenov A."/>
            <person name="Kim S.J."/>
            <person name="Kim D.S."/>
        </authorList>
    </citation>
    <scope>VARIANTS SPG4 44-SER--VAL-616 DEL; 245-SER--VAL-616 DEL; 254-LYS--VAL-616 DEL; GLY-372; LEU-399; ARG-451 DEL; ARG-458; HIS-499 AND 581-ARG--VAL-616 DEL</scope>
</reference>
<reference key="79">
    <citation type="journal article" date="2014" name="Parkinsonism Relat. Disord.">
        <title>Spastin mutation screening in Chinese patients with pure hereditary spastic paraplegia.</title>
        <authorList>
            <person name="Wei Q.Q."/>
            <person name="Chen Y."/>
            <person name="Zheng Z.Z."/>
            <person name="Chen X."/>
            <person name="Huang R."/>
            <person name="Yang Y."/>
            <person name="Burgunder J."/>
            <person name="Shang H.F."/>
        </authorList>
    </citation>
    <scope>VARIANTS SPG4 PRO-363; LEU-399; VAL-441 AND ARG-595</scope>
</reference>
<reference key="80">
    <citation type="journal article" date="2017" name="J. Neurol. Neurosurg. Psych.">
        <title>Truncating mutations in SPAST patients are associated with a high rate of psychiatric comorbidities in hereditary spastic paraplegia.</title>
        <authorList>
            <person name="Chelban V."/>
            <person name="Tucci A."/>
            <person name="Lynch D.S."/>
            <person name="Polke J.M."/>
            <person name="Santos L."/>
            <person name="Jonvik H."/>
            <person name="Groppa S."/>
            <person name="Wood N.W."/>
            <person name="Houlden H."/>
        </authorList>
    </citation>
    <scope>VARIANTS SPG4 LYS-328; LYS-366; LEU-368; VAL-368; THR-372; TYR-386; THR-390; ALA-418; TYR-470; THR-485; MET-498 AND 546-GLY--VAL-616 DEL</scope>
</reference>
<name>SPAST_HUMAN</name>
<feature type="chain" id="PRO_0000084763" description="Spastin">
    <location>
        <begin position="1"/>
        <end position="616"/>
    </location>
</feature>
<feature type="topological domain" description="Cytoplasmic" evidence="2 80">
    <location>
        <begin position="1"/>
        <end position="56"/>
    </location>
</feature>
<feature type="intramembrane region" description="Helical" evidence="2 80">
    <location>
        <begin position="57"/>
        <end position="77"/>
    </location>
</feature>
<feature type="topological domain" description="Cytoplasmic" evidence="2 80">
    <location>
        <begin position="78"/>
        <end position="616"/>
    </location>
</feature>
<feature type="domain" description="MIT" evidence="1">
    <location>
        <begin position="120"/>
        <end position="195"/>
    </location>
</feature>
<feature type="region of interest" description="Required for interaction with RTN1" evidence="35">
    <location>
        <begin position="1"/>
        <end position="300"/>
    </location>
</feature>
<feature type="region of interest" description="Required for midbody localization" evidence="45">
    <location>
        <begin position="1"/>
        <end position="194"/>
    </location>
</feature>
<feature type="region of interest" description="Required for interaction with ATL1" evidence="34 38">
    <location>
        <begin position="1"/>
        <end position="80"/>
    </location>
</feature>
<feature type="region of interest" description="Required for nuclear localization" evidence="21">
    <location>
        <begin position="1"/>
        <end position="50"/>
    </location>
</feature>
<feature type="region of interest" description="Disordered" evidence="3">
    <location>
        <begin position="1"/>
        <end position="43"/>
    </location>
</feature>
<feature type="region of interest" description="Required for interaction with SSNA1 and microtubules" evidence="25">
    <location>
        <begin position="50"/>
        <end position="87"/>
    </location>
</feature>
<feature type="region of interest" description="Sufficient for interaction with CHMP1B" evidence="45">
    <location>
        <begin position="112"/>
        <end position="196"/>
    </location>
</feature>
<feature type="region of interest" description="Required for interaction with microtubules" evidence="25">
    <location>
        <begin position="114"/>
        <end position="200"/>
    </location>
</feature>
<feature type="region of interest" description="Disordered" evidence="3">
    <location>
        <begin position="224"/>
        <end position="266"/>
    </location>
</feature>
<feature type="region of interest" description="Sufficient for microtubule severing" evidence="25">
    <location>
        <begin position="228"/>
        <end position="616"/>
    </location>
</feature>
<feature type="region of interest" description="Required for interaction with microtubules and microtubule severing" evidence="25">
    <location>
        <begin position="270"/>
        <end position="328"/>
    </location>
</feature>
<feature type="region of interest" description="Disordered" evidence="3">
    <location>
        <begin position="278"/>
        <end position="312"/>
    </location>
</feature>
<feature type="region of interest" description="Required for interaction with microtubules" evidence="60">
    <location>
        <begin position="310"/>
        <end position="312"/>
    </location>
</feature>
<feature type="short sequence motif" description="Nuclear localization signal" evidence="2 21">
    <location>
        <begin position="4"/>
        <end position="11"/>
    </location>
</feature>
<feature type="short sequence motif" description="Nuclear export signal" evidence="2 32">
    <location>
        <begin position="59"/>
        <end position="67"/>
    </location>
</feature>
<feature type="short sequence motif" description="Nuclear localization signal" evidence="2 21">
    <location>
        <begin position="309"/>
        <end position="312"/>
    </location>
</feature>
<feature type="compositionally biased region" description="Pro residues" evidence="3">
    <location>
        <begin position="19"/>
        <end position="43"/>
    </location>
</feature>
<feature type="compositionally biased region" description="Polar residues" evidence="3">
    <location>
        <begin position="240"/>
        <end position="254"/>
    </location>
</feature>
<feature type="compositionally biased region" description="Polar residues" evidence="3">
    <location>
        <begin position="289"/>
        <end position="307"/>
    </location>
</feature>
<feature type="binding site" evidence="2 79">
    <location>
        <begin position="382"/>
        <end position="389"/>
    </location>
    <ligand>
        <name>ATP</name>
        <dbReference type="ChEBI" id="CHEBI:30616"/>
    </ligand>
</feature>
<feature type="modified residue" description="Phosphoserine" evidence="85 86">
    <location>
        <position position="245"/>
    </location>
</feature>
<feature type="modified residue" description="Phosphoserine" evidence="82 83 84 86">
    <location>
        <position position="268"/>
    </location>
</feature>
<feature type="modified residue" description="Phosphothreonine" evidence="82">
    <location>
        <position position="306"/>
    </location>
</feature>
<feature type="modified residue" description="Phosphoserine" evidence="86">
    <location>
        <position position="597"/>
    </location>
</feature>
<feature type="splice variant" id="VSP_036650" description="In isoform 3 and isoform 4." evidence="78">
    <location>
        <begin position="1"/>
        <end position="86"/>
    </location>
</feature>
<feature type="splice variant" id="VSP_000024" description="In isoform 2 and isoform 4." evidence="73 75">
    <location>
        <begin position="197"/>
        <end position="228"/>
    </location>
</feature>
<feature type="sequence variant" id="VAR_075827" description="In SPG4." evidence="66">
    <location>
        <begin position="44"/>
        <end position="616"/>
    </location>
</feature>
<feature type="sequence variant" id="VAR_010194" description="Acts as a disease modifier; patients carrying a mutated allele of spastin and L-44 on the other allele are affected by severe spastic paraplegia with an early age of onset; may decrease the activity of the alternative promoter which directs the synthesis of isoform 3 and isoform 4; dbSNP:rs121908515." evidence="6 24 26 42 44 48 51">
    <original>S</original>
    <variation>L</variation>
    <location>
        <position position="44"/>
    </location>
</feature>
<feature type="sequence variant" id="VAR_027205" description="Acts as a disease modifier; patients carrying a mutated allele of spastin and Q-45 on the other allele are affected by severe spastic paraplegia with an early age of onset; dbSNP:rs121908517." evidence="24">
    <original>P</original>
    <variation>Q</variation>
    <location>
        <position position="45"/>
    </location>
</feature>
<feature type="sequence variant" id="VAR_075828" description="In SPG4; dbSNP:rs1343258361." evidence="59">
    <original>A</original>
    <variation>T</variation>
    <location>
        <position position="95"/>
    </location>
</feature>
<feature type="sequence variant" id="VAR_067628" description="In SPG4; uncertain significance; dbSNP:rs372005558." evidence="52">
    <original>P</original>
    <variation>T</variation>
    <location>
        <position position="97"/>
    </location>
</feature>
<feature type="sequence variant" id="VAR_075829" description="In SPG4." evidence="59">
    <location>
        <begin position="112"/>
        <end position="616"/>
    </location>
</feature>
<feature type="sequence variant" id="VAR_075830" description="In SPG4." evidence="59">
    <location>
        <begin position="135"/>
        <end position="616"/>
    </location>
</feature>
<feature type="sequence variant" id="VAR_067563" description="In SPG4; likely benign; dbSNP:rs141944844." evidence="48 51">
    <original>V</original>
    <variation>I</variation>
    <location>
        <position position="162"/>
    </location>
</feature>
<feature type="sequence variant" id="VAR_026758" description="In SPG4; dbSNP:rs1553400016." evidence="36">
    <original>L</original>
    <variation>V</variation>
    <location>
        <position position="195"/>
    </location>
</feature>
<feature type="sequence variant" id="VAR_067629" description="In SPG4; uncertain significance; dbSNP:rs1553311831." evidence="52">
    <original>V</original>
    <variation>D</variation>
    <location>
        <position position="201"/>
    </location>
</feature>
<feature type="sequence variant" id="VAR_067630" description="In dbSNP:rs1182763020." evidence="48">
    <original>S</original>
    <variation>G</variation>
    <location>
        <position position="229"/>
    </location>
</feature>
<feature type="sequence variant" id="VAR_075831" description="In SPG4." evidence="68">
    <location>
        <begin position="244"/>
        <end position="616"/>
    </location>
</feature>
<feature type="sequence variant" id="VAR_075832" description="In SPG4." evidence="66">
    <location>
        <begin position="245"/>
        <end position="616"/>
    </location>
</feature>
<feature type="sequence variant" id="VAR_075833" description="In SPG4." evidence="66">
    <location>
        <begin position="254"/>
        <end position="616"/>
    </location>
</feature>
<feature type="sequence variant" id="VAR_067631" description="In SPG4." evidence="53">
    <location>
        <position position="287"/>
    </location>
</feature>
<feature type="sequence variant" id="VAR_067632" description="In SPG4; dbSNP:rs773193617." evidence="53">
    <original>P</original>
    <variation>L</variation>
    <location>
        <position position="293"/>
    </location>
</feature>
<feature type="sequence variant" id="VAR_075834" description="In SPG4; dbSNP:rs202152835." evidence="61">
    <original>R</original>
    <variation>H</variation>
    <location>
        <position position="309"/>
    </location>
</feature>
<feature type="sequence variant" id="VAR_067633" description="In SPG4; uncertain significance; dbSNP:rs1553315215." evidence="52">
    <original>L</original>
    <variation>S</variation>
    <location>
        <position position="314"/>
    </location>
</feature>
<feature type="sequence variant" id="VAR_079314" description="In SPG4; uncertain significance." evidence="72">
    <original>I</original>
    <variation>K</variation>
    <location>
        <position position="328"/>
    </location>
</feature>
<feature type="sequence variant" id="VAR_067634" description="In SPG4; uncertain significance." evidence="53">
    <original>I</original>
    <variation>L</variation>
    <location>
        <position position="328"/>
    </location>
</feature>
<feature type="sequence variant" id="VAR_019448" description="In SPG4; abrogates ATPase activity and promotes microtubule binding; dbSNP:rs121908513." evidence="16 30">
    <original>I</original>
    <variation>K</variation>
    <location>
        <position position="344"/>
    </location>
</feature>
<feature type="sequence variant" id="VAR_027206" description="In SPG4; promotes microtubule binding; dbSNP:rs1553315329." evidence="14 30">
    <original>Q</original>
    <variation>K</variation>
    <location>
        <position position="347"/>
    </location>
</feature>
<feature type="sequence variant" id="VAR_067564" description="In SPG4; uncertain significance; dbSNP:rs1057519181." evidence="51">
    <original>E</original>
    <variation>K</variation>
    <location>
        <position position="356"/>
    </location>
</feature>
<feature type="sequence variant" id="VAR_067635" description="In SPG4; uncertain significance; dbSNP:rs1553315347." evidence="52">
    <original>L</original>
    <variation>V</variation>
    <location>
        <position position="360"/>
    </location>
</feature>
<feature type="sequence variant" id="VAR_027207" description="In SPG4; dbSNP:rs1553315352." evidence="26">
    <original>P</original>
    <variation>L</variation>
    <location>
        <position position="361"/>
    </location>
</feature>
<feature type="sequence variant" id="VAR_010195" description="In SPG4; dbSNP:rs121908509." evidence="4 5">
    <original>S</original>
    <variation>C</variation>
    <location>
        <position position="362"/>
    </location>
</feature>
<feature type="sequence variant" id="VAR_075835" description="In SPG4." evidence="65">
    <original>L</original>
    <variation>P</variation>
    <location>
        <position position="363"/>
    </location>
</feature>
<feature type="sequence variant" id="VAR_075836" description="In SPG4; dbSNP:rs1553315355." evidence="55">
    <original>R</original>
    <variation>M</variation>
    <location>
        <position position="364"/>
    </location>
</feature>
<feature type="sequence variant" id="VAR_067636" description="In SPG4; dbSNP:rs1553315355." evidence="42">
    <original>R</original>
    <variation>T</variation>
    <location>
        <position position="364"/>
    </location>
</feature>
<feature type="sequence variant" id="VAR_067565" description="In SPG4; uncertain significance." evidence="51">
    <original>P</original>
    <variation>S</variation>
    <location>
        <position position="365"/>
    </location>
</feature>
<feature type="sequence variant" id="VAR_079315" description="In SPG4; uncertain significance; dbSNP:rs1553315356." evidence="72">
    <original>E</original>
    <variation>K</variation>
    <location>
        <position position="366"/>
    </location>
</feature>
<feature type="sequence variant" id="VAR_075837" description="In SPG4; dbSNP:rs370845582." evidence="55 72">
    <original>F</original>
    <variation>L</variation>
    <location>
        <position position="368"/>
    </location>
</feature>
<feature type="sequence variant" id="VAR_079316" description="In SPG4; uncertain significance." evidence="72">
    <original>F</original>
    <variation>V</variation>
    <location>
        <position position="368"/>
    </location>
</feature>
<feature type="sequence variant" id="VAR_027208" description="In SPG4; promotes microtubule binding and the formation of thick microtubule bundles." evidence="5 10">
    <original>G</original>
    <variation>R</variation>
    <location>
        <position position="370"/>
    </location>
</feature>
<feature type="sequence variant" id="VAR_075838" description="In SPG4; dbSNP:rs1553316807." evidence="66">
    <original>R</original>
    <variation>G</variation>
    <location>
        <position position="372"/>
    </location>
</feature>
<feature type="sequence variant" id="VAR_079317" description="In SPG4; uncertain significance." evidence="72">
    <original>R</original>
    <variation>T</variation>
    <location>
        <position position="372"/>
    </location>
</feature>
<feature type="sequence variant" id="VAR_075839" description="In SPG4." evidence="55">
    <original>G</original>
    <variation>E</variation>
    <location>
        <position position="377"/>
    </location>
</feature>
<feature type="sequence variant" id="VAR_019439" description="In SPG4; dbSNP:rs1553316816." evidence="20">
    <original>L</original>
    <variation>Q</variation>
    <location>
        <position position="378"/>
    </location>
</feature>
<feature type="sequence variant" id="VAR_067637" description="In SPG4; dbSNP:rs1553316816." evidence="53">
    <original>L</original>
    <variation>R</variation>
    <location>
        <position position="378"/>
    </location>
</feature>
<feature type="sequence variant" id="VAR_067638" description="In SPG4; dbSNP:rs1553316819." evidence="42 53">
    <original>L</original>
    <variation>H</variation>
    <location>
        <position position="380"/>
    </location>
</feature>
<feature type="sequence variant" id="VAR_027209" description="In SPG4; promotes microtubule binding and the formation of thick microtubule bundles; dbSNP:rs1553316822." evidence="5 10">
    <original>F</original>
    <variation>C</variation>
    <location>
        <position position="381"/>
    </location>
</feature>
<feature type="sequence variant" id="VAR_067566" description="In SPG4; uncertain significance; dbSNP:rs1553316826." evidence="51">
    <original>G</original>
    <variation>R</variation>
    <location>
        <position position="382"/>
    </location>
</feature>
<feature type="sequence variant" id="VAR_027210" description="In SPG4; abrogates ATPase activity, promotes microtubule binding and the formation of thick microtubule bundles; dbSNP:rs1553316834." evidence="5 10 30">
    <original>N</original>
    <variation>K</variation>
    <location>
        <position position="386"/>
    </location>
</feature>
<feature type="sequence variant" id="VAR_019440" description="In SPG4; dbSNP:rs121908514." evidence="23">
    <original>N</original>
    <variation>S</variation>
    <location>
        <position position="386"/>
    </location>
</feature>
<feature type="sequence variant" id="VAR_079318" description="In SPG4; uncertain significance." evidence="72">
    <original>N</original>
    <variation>Y</variation>
    <location>
        <position position="386"/>
    </location>
</feature>
<feature type="sequence variant" id="VAR_027211" description="In SPG4; abrogates ATPase activity, promotes microtubule binding and the formation of thick microtubule bundles and impairs traffic from the ER to Golgi; dbSNP:rs1553316837." evidence="5 10 14 30 31 34 46">
    <original>K</original>
    <variation>R</variation>
    <location>
        <position position="388"/>
    </location>
</feature>
<feature type="sequence variant" id="VAR_079319" description="In SPG4; uncertain significance; dbSNP:rs1131691977." evidence="72">
    <original>M</original>
    <variation>T</variation>
    <location>
        <position position="390"/>
    </location>
</feature>
<feature type="sequence variant" id="VAR_019441" description="In SPG4; dbSNP:rs797044850." evidence="20">
    <original>M</original>
    <variation>V</variation>
    <location>
        <position position="390"/>
    </location>
</feature>
<feature type="sequence variant" id="VAR_067639" description="In SPG4; dbSNP:rs1553316845." evidence="53">
    <original>L</original>
    <variation>P</variation>
    <location>
        <position position="391"/>
    </location>
</feature>
<feature type="sequence variant" id="VAR_067640" description="In SPG4." evidence="53">
    <location>
        <begin position="393"/>
        <end position="396"/>
    </location>
</feature>
<feature type="sequence variant" id="VAR_027212" description="In SPG4; dbSNP:rs1553317025." evidence="11 59 65 66">
    <original>S</original>
    <variation>L</variation>
    <location>
        <position position="399"/>
    </location>
</feature>
<feature type="sequence variant" id="VAR_019449" description="In SPG4; dbSNP:rs1679265391." evidence="15">
    <location>
        <position position="404"/>
    </location>
</feature>
<feature type="sequence variant" id="VAR_075840" description="In SPG4; dbSNP:rs1553317038." evidence="59">
    <original>I</original>
    <variation>R</variation>
    <location>
        <position position="406"/>
    </location>
</feature>
<feature type="sequence variant" id="VAR_026759" description="In SPG4; dbSNP:rs587777757." evidence="36">
    <original>I</original>
    <variation>V</variation>
    <location>
        <position position="406"/>
    </location>
</feature>
<feature type="sequence variant" id="VAR_067567" description="In SPG4; uncertain significance." evidence="51">
    <original>S</original>
    <variation>I</variation>
    <location>
        <position position="407"/>
    </location>
</feature>
<feature type="sequence variant" id="VAR_019450" description="In SPG4; dbSNP:rs1553317041." evidence="13">
    <original>S</original>
    <variation>R</variation>
    <location>
        <position position="407"/>
    </location>
</feature>
<feature type="sequence variant" id="VAR_067641" description="In SPG4; dbSNP:rs1064793273." evidence="53 59">
    <original>A</original>
    <variation>T</variation>
    <location>
        <position position="409"/>
    </location>
</feature>
<feature type="sequence variant" id="VAR_067642" description="In SPG4; dbSNP:rs1679266894." evidence="53">
    <original>S</original>
    <variation>R</variation>
    <location>
        <position position="410"/>
    </location>
</feature>
<feature type="sequence variant" id="VAR_067568" description="In SPG4; dbSNP:rs1553317045." evidence="50">
    <original>S</original>
    <variation>L</variation>
    <location>
        <position position="413"/>
    </location>
</feature>
<feature type="sequence variant" id="VAR_079320" description="In SPG4; uncertain significance." evidence="72">
    <original>E</original>
    <variation>A</variation>
    <location>
        <position position="418"/>
    </location>
</feature>
<feature type="sequence variant" id="VAR_067569" description="In SPG4; uncertain significance; dbSNP:rs1679543653." evidence="51">
    <original>L</original>
    <variation>F</variation>
    <location>
        <position position="422"/>
    </location>
</feature>
<feature type="sequence variant" id="VAR_035902" description="In a breast cancer sample; somatic mutation; dbSNP:rs1553318168." evidence="40">
    <original>V</original>
    <variation>L</variation>
    <location>
        <position position="423"/>
    </location>
</feature>
<feature type="sequence variant" id="VAR_010196" description="In SPG4; dbSNP:rs1553318169." evidence="6">
    <original>R</original>
    <variation>G</variation>
    <location>
        <position position="424"/>
    </location>
</feature>
<feature type="sequence variant" id="VAR_067643" description="In SPG4; dbSNP:rs1060502227." evidence="48">
    <original>L</original>
    <variation>F</variation>
    <location>
        <position position="426"/>
    </location>
</feature>
<feature type="sequence variant" id="VAR_027213" description="In SPG4; promotes microtubule binding and the formation of thick microtubule bundles; dbSNP:rs1060502227." evidence="5 10 11 59">
    <original>L</original>
    <variation>V</variation>
    <location>
        <position position="426"/>
    </location>
</feature>
<feature type="sequence variant" id="VAR_075841" description="In SPG4." evidence="59">
    <location>
        <begin position="431"/>
        <end position="616"/>
    </location>
</feature>
<feature type="sequence variant" id="VAR_027214" description="In SPG4; dbSNP:rs1553318182." evidence="37">
    <original>P</original>
    <variation>L</variation>
    <location>
        <position position="435"/>
    </location>
</feature>
<feature type="sequence variant" id="VAR_027215" description="In SPG4; dbSNP:rs1553318184." evidence="8">
    <original>S</original>
    <variation>F</variation>
    <location>
        <position position="436"/>
    </location>
</feature>
<feature type="sequence variant" id="VAR_067644" description="In SPG4; dbSNP:rs2148753700." evidence="53">
    <original>S</original>
    <variation>P</variation>
    <location>
        <position position="436"/>
    </location>
</feature>
<feature type="sequence variant" id="VAR_027216" description="In SPG4; dbSNP:rs121908512." evidence="7">
    <original>D</original>
    <variation>G</variation>
    <location>
        <position position="441"/>
    </location>
</feature>
<feature type="sequence variant" id="VAR_067645" description="In SPG4; dbSNP:rs1553318188." evidence="53">
    <original>D</original>
    <variation>N</variation>
    <location>
        <position position="441"/>
    </location>
</feature>
<feature type="sequence variant" id="VAR_075842" description="In SPG4; dbSNP:rs121908512." evidence="65">
    <original>D</original>
    <variation>V</variation>
    <location>
        <position position="441"/>
    </location>
</feature>
<feature type="sequence variant" id="VAR_067570" description="In SPG4; uncertain significance; dbSNP:rs1131691838." evidence="51">
    <original>S</original>
    <variation>N</variation>
    <location>
        <position position="445"/>
    </location>
</feature>
<feature type="sequence variant" id="VAR_010197" description="In SPG4; abrogates binding to the tail of beta-3-tubulin, abolishes microtubule severing and promotes the formation of thick microtubule bundles; dbSNP:rs121908510." evidence="4 5 10 41">
    <original>C</original>
    <variation>Y</variation>
    <location>
        <position position="448"/>
    </location>
</feature>
<feature type="sequence variant" id="VAR_075843" description="In SPG4; dbSNP:rs1553318224." evidence="55">
    <original>R</original>
    <variation>S</variation>
    <location>
        <position position="450"/>
    </location>
</feature>
<feature type="sequence variant" id="VAR_075844" description="In SPG4." evidence="66">
    <location>
        <position position="451"/>
    </location>
</feature>
<feature type="sequence variant" id="VAR_067571" description="In SPG4; dbSNP:rs1553318230." evidence="50">
    <original>E</original>
    <variation>K</variation>
    <location>
        <position position="454"/>
    </location>
</feature>
<feature type="sequence variant" id="VAR_075845" description="In SPG4; dbSNP:rs1036039694." evidence="66">
    <original>S</original>
    <variation>R</variation>
    <location>
        <position position="458"/>
    </location>
</feature>
<feature type="sequence variant" id="VAR_027217" description="In SPG4; dbSNP:rs1553318238." evidence="27">
    <original>R</original>
    <variation>G</variation>
    <location>
        <position position="459"/>
    </location>
</feature>
<feature type="sequence variant" id="VAR_027218" description="In SPG4; dbSNP:rs878854990." evidence="27 59">
    <original>R</original>
    <variation>C</variation>
    <location>
        <position position="460"/>
    </location>
</feature>
<feature type="sequence variant" id="VAR_027219" description="In SPG4; promotes microtubule binding and the formation of thick microtubule bundles; dbSNP:rs1553318241." evidence="5 10">
    <original>R</original>
    <variation>L</variation>
    <location>
        <position position="460"/>
    </location>
</feature>
<feature type="sequence variant" id="VAR_067572" description="In SPG4; dbSNP:rs878854990." evidence="48 51 53">
    <original>R</original>
    <variation>S</variation>
    <location>
        <position position="460"/>
    </location>
</feature>
<feature type="sequence variant" id="VAR_075846" description="In SPG4; dbSNP:rs1553318242." evidence="68">
    <original>L</original>
    <variation>P</variation>
    <location>
        <position position="461"/>
    </location>
</feature>
<feature type="sequence variant" id="VAR_067646" description="In SPG4; dbSNP:rs1553318248." evidence="53">
    <original>T</original>
    <variation>A</variation>
    <location>
        <position position="463"/>
    </location>
</feature>
<feature type="sequence variant" id="VAR_067647" description="In SPG4; uncertain significance; dbSNP:rs1553318251." evidence="52">
    <original>E</original>
    <variation>A</variation>
    <location>
        <position position="464"/>
    </location>
</feature>
<feature type="sequence variant" id="VAR_027220" description="In SPG4; dbSNP:rs121908516." evidence="24">
    <original>D</original>
    <variation>V</variation>
    <location>
        <position position="470"/>
    </location>
</feature>
<feature type="sequence variant" id="VAR_079321" description="In SPG4; uncertain significance; dbSNP:rs1553318261." evidence="72">
    <original>D</original>
    <variation>Y</variation>
    <location>
        <position position="470"/>
    </location>
</feature>
<feature type="sequence variant" id="VAR_067573" description="In SPG4; uncertain significance; dbSNP:rs1553318315." evidence="51">
    <original>V</original>
    <variation>L</variation>
    <location>
        <position position="482"/>
    </location>
</feature>
<feature type="sequence variant" id="VAR_079322" description="In SPG4; uncertain significance." evidence="72">
    <original>A</original>
    <variation>T</variation>
    <location>
        <position position="485"/>
    </location>
</feature>
<feature type="sequence variant" id="VAR_027221" description="In SPG4; dbSNP:rs536599683." evidence="17">
    <original>A</original>
    <variation>V</variation>
    <location>
        <position position="485"/>
    </location>
</feature>
<feature type="sequence variant" id="VAR_027222" description="In SPG4; dbSNP:rs1553318331." evidence="11">
    <original>P</original>
    <variation>L</variation>
    <location>
        <position position="489"/>
    </location>
</feature>
<feature type="sequence variant" id="VAR_075847" description="In SPG4." evidence="29">
    <location>
        <begin position="490"/>
        <end position="616"/>
    </location>
</feature>
<feature type="sequence variant" id="VAR_067648" description="In SPG4; dbSNP:rs1553318337." evidence="53">
    <original>L</original>
    <variation>F</variation>
    <location>
        <position position="492"/>
    </location>
</feature>
<feature type="sequence variant" id="VAR_026760" description="In SPG4; dbSNP:rs1553318342." evidence="36">
    <original>D</original>
    <variation>G</variation>
    <location>
        <position position="493"/>
    </location>
</feature>
<feature type="sequence variant" id="VAR_067649" description="In SPG4; dbSNP:rs1553318350." evidence="52 53">
    <original>R</original>
    <variation>G</variation>
    <location>
        <position position="498"/>
    </location>
</feature>
<feature type="sequence variant" id="VAR_079323" description="In SPG4; uncertain significance." evidence="72">
    <original>R</original>
    <variation>M</variation>
    <location>
        <position position="498"/>
    </location>
</feature>
<feature type="sequence variant" id="VAR_010198" description="In SPG4; abrogates ATPase activity, promotes microtubule binding and the formation of thick microtubule bundles; dbSNP:rs121908511." evidence="4 5 9 10 14 30">
    <original>R</original>
    <variation>C</variation>
    <location>
        <position position="499"/>
    </location>
</feature>
<feature type="sequence variant" id="VAR_026761" description="In SPG4; dbSNP:rs878854991." evidence="36 66">
    <original>R</original>
    <variation>H</variation>
    <location>
        <position position="499"/>
    </location>
</feature>
<feature type="sequence variant" id="VAR_019442" description="In SPG4; dbSNP:rs1553319087." evidence="18">
    <original>R</original>
    <variation>L</variation>
    <location>
        <position position="503"/>
    </location>
</feature>
<feature type="sequence variant" id="VAR_067650" description="In SPG4." evidence="53">
    <original>R</original>
    <variation>RR</variation>
    <location>
        <position position="503"/>
    </location>
</feature>
<feature type="sequence variant" id="VAR_026762" description="In SPG4; dbSNP:rs864622162." evidence="36 59">
    <original>R</original>
    <variation>W</variation>
    <location>
        <position position="503"/>
    </location>
</feature>
<feature type="sequence variant" id="VAR_027223" description="In SPG4; dbSNP:rs1553319093." evidence="12">
    <original>E</original>
    <variation>D</variation>
    <location>
        <position position="512"/>
    </location>
</feature>
<feature type="sequence variant" id="VAR_067574" description="In SPG4; uncertain significance." evidence="51">
    <location>
        <position position="512"/>
    </location>
</feature>
<feature type="sequence variant" id="VAR_067651" description="In SPG4; dbSNP:rs1553319286." evidence="53">
    <original>R</original>
    <variation>G</variation>
    <location>
        <position position="514"/>
    </location>
</feature>
<feature type="sequence variant" id="VAR_019443" description="In SPG4." evidence="20">
    <location>
        <position position="515"/>
    </location>
</feature>
<feature type="sequence variant" id="VAR_019444" description="In SPG4; dbSNP:rs1553319317." evidence="19">
    <original>L</original>
    <variation>P</variation>
    <location>
        <position position="534"/>
    </location>
</feature>
<feature type="sequence variant" id="VAR_067575" description="In SPG4; uncertain significance; dbSNP:rs1553319314." evidence="51">
    <original>L</original>
    <variation>V</variation>
    <location>
        <position position="534"/>
    </location>
</feature>
<feature type="sequence variant" id="VAR_079324" description="In SPG4." evidence="72">
    <location>
        <begin position="546"/>
        <end position="616"/>
    </location>
</feature>
<feature type="sequence variant" id="VAR_067652" description="In SPG4; uncertain significance; dbSNP:rs1553319537." evidence="52">
    <original>T</original>
    <variation>I</variation>
    <location>
        <position position="550"/>
    </location>
</feature>
<feature type="sequence variant" id="VAR_019451" description="In SPG4; requires 2 nucleotide substitutions." evidence="13">
    <original>A</original>
    <variation>Y</variation>
    <location>
        <position position="551"/>
    </location>
</feature>
<feature type="sequence variant" id="VAR_075848" description="In SPG4; dbSNP:rs1553319548." evidence="68">
    <original>D</original>
    <variation>G</variation>
    <location>
        <position position="555"/>
    </location>
</feature>
<feature type="sequence variant" id="VAR_027224" description="In SPG4; dbSNP:rs1553319546." evidence="5">
    <original>D</original>
    <variation>N</variation>
    <location>
        <position position="555"/>
    </location>
</feature>
<feature type="sequence variant" id="VAR_027225" description="In SPG4; promotes microtubule binding and the formation of thick microtubule bundles; dbSNP:rs2148760886." evidence="5 10">
    <original>A</original>
    <variation>V</variation>
    <location>
        <position position="556"/>
    </location>
</feature>
<feature type="sequence variant" id="VAR_027226" description="In SPG4; dbSNP:rs864622179." evidence="8 11">
    <original>G</original>
    <variation>D</variation>
    <location>
        <position position="559"/>
    </location>
</feature>
<feature type="sequence variant" id="VAR_075849" description="In SPG4; dbSNP:rs878854992." evidence="59">
    <original>G</original>
    <variation>R</variation>
    <location>
        <position position="559"/>
    </location>
</feature>
<feature type="sequence variant" id="VAR_075850" description="In SPG4." evidence="59">
    <location>
        <begin position="562"/>
        <end position="616"/>
    </location>
</feature>
<feature type="sequence variant" id="VAR_027227" description="In SPG4; dbSNP:rs121908518." evidence="9 24">
    <original>R</original>
    <variation>G</variation>
    <location>
        <position position="562"/>
    </location>
</feature>
<feature type="sequence variant" id="VAR_067576" description="In SPG4; uncertain significance." evidence="51">
    <original>R</original>
    <variation>P</variation>
    <location>
        <position position="562"/>
    </location>
</feature>
<feature type="sequence variant" id="VAR_027228" description="In SPG4; dbSNP:rs863224923." evidence="11">
    <original>R</original>
    <variation>Q</variation>
    <location>
        <position position="562"/>
    </location>
</feature>
<feature type="sequence variant" id="VAR_067653" description="In SPG4; uncertain significance; dbSNP:rs144594804." evidence="42">
    <original>N</original>
    <variation>H</variation>
    <location>
        <position position="579"/>
    </location>
</feature>
<feature type="sequence variant" id="VAR_067654" description="In SPG4; dbSNP:rs1553321202." evidence="53">
    <original>I</original>
    <variation>T</variation>
    <location>
        <position position="580"/>
    </location>
</feature>
<feature type="sequence variant" id="VAR_075851" description="In SPG4." evidence="66 68">
    <location>
        <begin position="581"/>
        <end position="616"/>
    </location>
</feature>
<feature type="sequence variant" id="VAR_010199" description="In SPG4." evidence="6">
    <original>D</original>
    <variation>H</variation>
    <location>
        <position position="584"/>
    </location>
</feature>
<feature type="sequence variant" id="VAR_075852" description="In SPG4; dbSNP:rs1553321245." evidence="65">
    <original>S</original>
    <variation>R</variation>
    <location>
        <position position="595"/>
    </location>
</feature>
<feature type="sequence variant" id="VAR_026763" description="In SPG4; dbSNP:rs1553321266." evidence="36">
    <original>W</original>
    <variation>C</variation>
    <location>
        <position position="607"/>
    </location>
</feature>
<feature type="sequence variant" id="VAR_019445" description="In SPG4; variant form with congenital arachnoid cysts; dbSNP:rs1573186691." evidence="22">
    <original>T</original>
    <variation>I</variation>
    <location>
        <position position="614"/>
    </location>
</feature>
<feature type="sequence variant" id="VAR_019452" description="In SPG4; dbSNP:rs765941217." evidence="13">
    <original>T</original>
    <variation>I</variation>
    <location>
        <position position="615"/>
    </location>
</feature>
<feature type="mutagenesis site" description="Cytoplasmic and nuclear." evidence="32">
    <original>M</original>
    <variation>V</variation>
    <location>
        <position position="1"/>
    </location>
</feature>
<feature type="mutagenesis site" description="Abolishes localization to lipid droplets." evidence="69">
    <original>R</original>
    <variation>G</variation>
    <location>
        <position position="65"/>
    </location>
</feature>
<feature type="mutagenesis site" description="Does not affect localization to lipid droplets." evidence="69">
    <original>RFSR</original>
    <variation>GFSG</variation>
    <location>
        <begin position="81"/>
        <end position="84"/>
    </location>
</feature>
<feature type="mutagenesis site" description="Exclusively cytoplasmic." evidence="32">
    <original>M</original>
    <variation>V</variation>
    <location>
        <position position="87"/>
    </location>
</feature>
<feature type="mutagenesis site" description="Impairs binding to CHMP1B. Impairs midbody localization; when associated with D-124." evidence="45">
    <original>H</original>
    <variation>D</variation>
    <location>
        <position position="120"/>
    </location>
</feature>
<feature type="mutagenesis site" description="Impairs binding to CHMP1B." evidence="45">
    <original>F</original>
    <variation>A</variation>
    <location>
        <position position="124"/>
    </location>
</feature>
<feature type="mutagenesis site" description="Impairs binding to CHMP1B. Impairs midbody localization; when associated with D-120." evidence="45">
    <original>F</original>
    <variation>D</variation>
    <location>
        <position position="124"/>
    </location>
</feature>
<feature type="mutagenesis site" description="Loss of microtubule-binding." evidence="60">
    <original>KKK</original>
    <variation>QQQ</variation>
    <location>
        <begin position="310"/>
        <end position="312"/>
    </location>
</feature>
<feature type="mutagenesis site" description="Abrogates ATPase activity and abolishes microtubule severing." evidence="30">
    <original>K</original>
    <variation>A</variation>
    <location>
        <position position="388"/>
    </location>
</feature>
<feature type="mutagenesis site" description="Abrogates binding to the tail of alpha-tubulin and beta-3-tubulin, impairs ATPase activity and abolishes microtubule severing." evidence="41">
    <original>Y</original>
    <variation>A</variation>
    <location>
        <position position="415"/>
    </location>
</feature>
<feature type="mutagenesis site" description="Abrogates ATP hydrolysis, abolishes microtubule severing, stabilizes the homohexameric form, and promotes microtubule binding and redistribution from the endosome to microtubules." evidence="30 38 41 43 57 58 60 62">
    <original>E</original>
    <variation>Q</variation>
    <location>
        <position position="442"/>
    </location>
</feature>
<feature type="mutagenesis site" description="Abolishes ATPase activity." evidence="62">
    <original>C</original>
    <variation>A</variation>
    <variation>G</variation>
    <location>
        <position position="448"/>
    </location>
</feature>
<feature type="mutagenesis site" description="Does not affect ATPase activity." evidence="62">
    <original>C</original>
    <variation>S</variation>
    <location>
        <position position="448"/>
    </location>
</feature>
<feature type="mutagenesis site" description="Abrogates binding to the tail of alpha-tubulin and beta-3-tubulin, impairs ATPase activity and abolishes microtubule severing." evidence="41">
    <original>R</original>
    <variation>G</variation>
    <location>
        <position position="451"/>
    </location>
</feature>
<feature type="mutagenesis site" description="Abrogates binding to the tail of alpha-tubulin and beta-3-tubulin and abolishes microtubule severing." evidence="41">
    <original>A</original>
    <variation>E</variation>
    <location>
        <position position="457"/>
    </location>
</feature>
<feature type="helix" evidence="89">
    <location>
        <begin position="113"/>
        <end position="135"/>
    </location>
</feature>
<feature type="strand" evidence="89">
    <location>
        <begin position="138"/>
        <end position="140"/>
    </location>
</feature>
<feature type="helix" evidence="89">
    <location>
        <begin position="142"/>
        <end position="161"/>
    </location>
</feature>
<feature type="helix" evidence="89">
    <location>
        <begin position="169"/>
        <end position="192"/>
    </location>
</feature>
<feature type="helix" evidence="87">
    <location>
        <begin position="326"/>
        <end position="331"/>
    </location>
</feature>
<feature type="helix" evidence="88">
    <location>
        <begin position="341"/>
        <end position="343"/>
    </location>
</feature>
<feature type="helix" evidence="87">
    <location>
        <begin position="348"/>
        <end position="357"/>
    </location>
</feature>
<feature type="helix" evidence="87">
    <location>
        <begin position="359"/>
        <end position="363"/>
    </location>
</feature>
<feature type="turn" evidence="88">
    <location>
        <begin position="365"/>
        <end position="367"/>
    </location>
</feature>
<feature type="helix" evidence="88">
    <location>
        <begin position="370"/>
        <end position="372"/>
    </location>
</feature>
<feature type="strand" evidence="87">
    <location>
        <begin position="376"/>
        <end position="386"/>
    </location>
</feature>
<feature type="helix" evidence="87">
    <location>
        <begin position="388"/>
        <end position="398"/>
    </location>
</feature>
<feature type="strand" evidence="87">
    <location>
        <begin position="402"/>
        <end position="407"/>
    </location>
</feature>
<feature type="turn" evidence="87">
    <location>
        <begin position="408"/>
        <end position="412"/>
    </location>
</feature>
<feature type="helix" evidence="87">
    <location>
        <begin position="425"/>
        <end position="432"/>
    </location>
</feature>
<feature type="strand" evidence="87">
    <location>
        <begin position="435"/>
        <end position="442"/>
    </location>
</feature>
<feature type="helix" evidence="87">
    <location>
        <begin position="443"/>
        <end position="446"/>
    </location>
</feature>
<feature type="helix" evidence="87">
    <location>
        <begin position="462"/>
        <end position="473"/>
    </location>
</feature>
<feature type="strand" evidence="87">
    <location>
        <begin position="480"/>
        <end position="487"/>
    </location>
</feature>
<feature type="helix" evidence="87">
    <location>
        <begin position="489"/>
        <end position="491"/>
    </location>
</feature>
<feature type="turn" evidence="87">
    <location>
        <begin position="494"/>
        <end position="496"/>
    </location>
</feature>
<feature type="helix" evidence="87">
    <location>
        <begin position="497"/>
        <end position="499"/>
    </location>
</feature>
<feature type="strand" evidence="87">
    <location>
        <begin position="501"/>
        <end position="505"/>
    </location>
</feature>
<feature type="helix" evidence="87">
    <location>
        <begin position="511"/>
        <end position="523"/>
    </location>
</feature>
<feature type="turn" evidence="87">
    <location>
        <begin position="524"/>
        <end position="526"/>
    </location>
</feature>
<feature type="helix" evidence="87">
    <location>
        <begin position="531"/>
        <end position="540"/>
    </location>
</feature>
<feature type="turn" evidence="87">
    <location>
        <begin position="541"/>
        <end position="543"/>
    </location>
</feature>
<feature type="helix" evidence="87">
    <location>
        <begin position="546"/>
        <end position="557"/>
    </location>
</feature>
<feature type="helix" evidence="87">
    <location>
        <begin position="559"/>
        <end position="563"/>
    </location>
</feature>
<feature type="helix" evidence="87">
    <location>
        <begin position="566"/>
        <end position="571"/>
    </location>
</feature>
<feature type="helix" evidence="87">
    <location>
        <begin position="574"/>
        <end position="576"/>
    </location>
</feature>
<feature type="helix" evidence="87">
    <location>
        <begin position="582"/>
        <end position="588"/>
    </location>
</feature>
<feature type="turn" evidence="87">
    <location>
        <begin position="589"/>
        <end position="591"/>
    </location>
</feature>
<feature type="helix" evidence="87">
    <location>
        <begin position="598"/>
        <end position="609"/>
    </location>
</feature>
<keyword id="KW-0002">3D-structure</keyword>
<keyword id="KW-0021">Allosteric enzyme</keyword>
<keyword id="KW-0024">Alternative initiation</keyword>
<keyword id="KW-0877">Alternative promoter usage</keyword>
<keyword id="KW-0025">Alternative splicing</keyword>
<keyword id="KW-0067">ATP-binding</keyword>
<keyword id="KW-0131">Cell cycle</keyword>
<keyword id="KW-0132">Cell division</keyword>
<keyword id="KW-0966">Cell projection</keyword>
<keyword id="KW-0963">Cytoplasm</keyword>
<keyword id="KW-0206">Cytoskeleton</keyword>
<keyword id="KW-0217">Developmental protein</keyword>
<keyword id="KW-0221">Differentiation</keyword>
<keyword id="KW-0225">Disease variant</keyword>
<keyword id="KW-0256">Endoplasmic reticulum</keyword>
<keyword id="KW-0967">Endosome</keyword>
<keyword id="KW-0890">Hereditary spastic paraplegia</keyword>
<keyword id="KW-0413">Isomerase</keyword>
<keyword id="KW-0551">Lipid droplet</keyword>
<keyword id="KW-0472">Membrane</keyword>
<keyword id="KW-0493">Microtubule</keyword>
<keyword id="KW-0523">Neurodegeneration</keyword>
<keyword id="KW-0524">Neurogenesis</keyword>
<keyword id="KW-0547">Nucleotide-binding</keyword>
<keyword id="KW-0539">Nucleus</keyword>
<keyword id="KW-0597">Phosphoprotein</keyword>
<keyword id="KW-1267">Proteomics identification</keyword>
<keyword id="KW-1185">Reference proteome</keyword>